<sequence>MTKKPGGPGKNRAINMLKRGLPRVFPLVGVKRVVMSLLDGRGPVRFVLALITFFKFTALAPTKALLGRWKAVEKSVAMKHLTSFKRELGTLIDAVNKRGRKQNKRGGNEGSIMWLASLAVVIACAGAMKLSNFQGKLLMTINNTDIADVIVIPTSKGENRCWVRAIDVGYMCEDTITYECPKLTMGNDPEDVDCWCDNQEVYVQYGRCTRTRHSKRSRRSVSVQTHGESSLVNKKEAWLDSTKATRYLMKTENWIIRNPGYAFLAAVLGWMLGSNNGQRVVFTILLLLVAPAYSFNCLGMGNRDFIEGASGATWVDLVLEGDSCLTIMANDKPTLDVRMINIEASQLAEVRSYCYHASVTDISTVARCPTTGEAHNEKRADSSYVCKQGFTDRGWGNGCGLFGKGSIDTCAKFSCTSKAIGRTIQPENIKYEVGIFVHGTTTSENHGNYSAQVGASQAAKFTVTPNAPSITLKLGDYGEVTLDCEPRSGLNTEAFYVMTVGSKSFLVHREWFHDLALPWTSPSSTAWRNRELLMEFEGAHATKQSVVALGSQEGGLHQALAGAIVVEYSSSVKLTSGHLKCRLKMDKLALKGTTYGMCTEKFSFAKNPVDTGHGTVVIELSYSGSDGPCKIPIVSVASLNDMTPVGRLVTVNPFVATSSANSKVLVEMEPPFGDSYIVVGRGDKQINHHWHKAGSTLGKAFSTTLKGAQRLAALGDTAWDFGSIGGVFNSIGRAVHQVFGGAFRTLFGGMSWITQGLMGALLLWMGVNARDRSIALAFLATGGVLVFLATNVHADTGCAIDITRKEMRCGSGIFVHNDVEAWVDRYKYLPETPRSLAKIVHKAHKEGVCGVRSVTRLEHQMWEAVRDELNVLLKENAVDLSVVVNKPVGRYRSAPKRLSMTQEKFEMGWKAWGKSILFAPELANSTFVVDGPETKECPDEHRAWNSMQIEDFGFGITSTRVWLKIREESTDECDGAIIGTAVKGHVAVHSDLSYWIESRYNDTWKLERAVFGEVKSCTWPETHTLWGDDVEESELIIPHTIAGPKSKHNRREGYKTQNQGPWDENGIVLDFDYCPGTKVTITEDCSKRGPSVRTTTDSGKLITDWCCRSCSLPPLRFRTENGCWYGMEIRPVMHDETTLVRSQVDAFKGEMVDPFQLGLLVMFLATQEVLRKRWTARLTIPAVLGVLLVLMLGGITYTDLARYVVLVAAAFAEANSGGDVLHLALIAVFKIQPAFLVMNMLSTRWTNQENVILVLGAAFFQLASVDLQIGVHGILNAAAIAWMIVRAITFPTTSSVTMPVLALLTPGMRALYLDTYRIILLVIGICSLLHERKKTMAKKKGAVLLGLALTSTGWFSPTTIAAGLMVCNPNKKRGWPATEFLSAVGLMFAIVGGLAELDIESMSIPFMLAGLMAVSYVVSGKATDMWLERAADISWEMDAAITGSSRRLDVKLDDDGDFHLIDDPGVPWKVWVLRMSCIGLAALTPWAIVPAAFGYWLTLKTTKRGGVFWDTPSPKPCSKGDTTTGVYRIMARGILGTYQAGVGVMYENVFHTLWHTTRGAAIMSGEGKLTPYWGSVREDRIAYGGPWRFDRKWNGTDDVQVIVVEPGKAAVNIQTKPGVFRTPFGEVGAVSLDYPRGTSGSPILDSNGDIIGLYGNGVELGDGSYVSAIVQGDRQEEPVPEAYTPNMLRKRQMTVLDLHPGSGKTRKILPQIIKDAIQQRLRTAVLAPTRVVAAEMAEALRGLPVRYQTSAVQREHQGNEIVDVMCHATLTHRLMSPNRVPNYNLFVMDEAHFTDPASIAARGYIATKVELGEAAAIFMTATPPGTTDPFPDSNAPIHDLQDEIPDRAWSSGYEWITEYAGKTVWFVASVKMGNEIAMCLQRAGKKVIQLNRKSYDTEYPKCKNGDWDFVITTDISEMGANFGASRVIDCRKSVKPTILEEGEGRVILGNPSPITSASAAQRRGRVGRNPNQVGDEYHYGGATSEDDSNLAHWTEAKIMLDNIHMPNGLVAQLYGPEREKAFTMDGEYRLRGEEKKNFLELLRTADLPVWLAYKVASNGIQYTDRKWCFDGPRTNAILEDNTEVEIVTRMGERKILKPRWLDARVYADHQALKWFKDFAAGKRSAVSFIEVLGRMPEHFMGKTREALDTMYLVATAEKGGKAHRMALEELPDALETITLIVAITVMTGGFFLLMMQRKGIGKMGLGALVLTLATFFLWAAEVPGTKIAGTLLIALLLMVVLIPEPEKQRSQTDNQLAVFLICVLTVVGVVAANEYGMLEKTKADLKSMFGGKTQASGLTGLPSMALDLRPATAWALYGGSTVVLTPLLKHLITSEYVTTSLASINSQAGSLFVLPRGVPFTDLDLTVGLVFLGCWGQITLTTFLTAMVLATLHYGYMLPGWQAEALRAAQRRTAAGIMKNAVVDGMVATDVPELERTTPLMQKKVGQVLLIGVSVAAFLVNPNVTTVREAGVLVTAATLTLWDNGASAVWNSTTATGLCHVMRGSYLAGGSIAWTLIKNADKPSLKRGRPGGRTLGEQWKEKLNAMSREEFFKYRREAIIEVDRTEARRARRENNIVGGHPVSRGSAKLRWLVEKGFVSPIGKVIDLGCGRGGWSYYAATLKKVQEVRGYTKGGAGHEEPMLMQSYGWNLVSLKSGVDVFYKPSEPSDTLFCDIGESSPSPEVEEQRTLRVLEMTSDWLHRGPREFCIKVLCPYMPKVIEKMEVLQRRFGGGLVRLPLSRNSNHEMYWVSGAAGNVVHAVNMTSQVLLGRMDRTVWRGPKYEEDVNLGSGTRAVGKGEVHSNQEKIKKRIQKLKEEFATTWHKDPEHPYRTWTYHGSYEVKATGSASSLVNGVVELMSKPWDAIANVTTMAMTDTTPFGQQRVFKEKVDTKAPEPPAGAKEVLNETTNWLWAHLSREKRPRLCTKEEFIKKVNSNAALGAVFAEQNQWSTAREAVDDPRFWEMVDEERENHLRGECHTCIYNMMGKREKKPGEFGKAKGSRAIWFMWLGARYLEFEALGFLNEDHWLSRENSGGGVEGSGVQKLGYILRDIAGKQGGKMYADDTAGWDTRITRTDLENEAKVLELLDGEHRMLARAIIELTYRHKVVKVMRPAAEGKTVMDVISREDQRGSGQVVTYALNTFTNIAVQLVRLMEAEGVIGPQHLEQLPRKTKIAVRTWLFENGEERVTRMAISGDDCVVKPLDDRFATALHFLNAMSKVRKDIQEWKPSHGWHDWQQVPFCSNHFQEIVMKDGRSIVVPCRGQDELIGRARISPGAGWNVKDTACLAKAYAQMWLLLYFHRRDLRLMANAICSAVPVDWVPTGRTSWSIHSKGEWMTTEDMLQVWNRVWIEENEWMMDKTPITSWTDVPYVGKREDIWCGSLIGTRSRATWAENIYAAINQVRAVIGKENYVDYMTSLRRYEDVLIQEDRVI</sequence>
<feature type="chain" id="PRO_0000405188" description="Genome polyprotein">
    <location>
        <begin position="1"/>
        <end position="3432"/>
    </location>
</feature>
<feature type="chain" id="PRO_0000037836" description="Capsid protein C">
    <location>
        <begin position="1"/>
        <end position="105"/>
    </location>
</feature>
<feature type="propeptide" id="PRO_0000405189" description="ER anchor for the capsid protein C, removed in mature form by serine protease NS3">
    <location>
        <begin position="106"/>
        <end position="127"/>
    </location>
</feature>
<feature type="chain" id="PRO_0000405190" description="Protein prM">
    <location>
        <begin position="128"/>
        <end position="294"/>
    </location>
</feature>
<feature type="chain" id="PRO_0000037837" description="Peptide pr">
    <location>
        <begin position="128"/>
        <end position="219"/>
    </location>
</feature>
<feature type="chain" id="PRO_0000037838" description="Small envelope protein M" evidence="2">
    <location>
        <begin position="220"/>
        <end position="294"/>
    </location>
</feature>
<feature type="chain" id="PRO_0000037839" description="Envelope protein E">
    <location>
        <begin position="295"/>
        <end position="794"/>
    </location>
</feature>
<feature type="chain" id="PRO_0000037840" description="Non-structural protein 1">
    <location>
        <begin position="795"/>
        <end position="1146"/>
    </location>
</feature>
<feature type="chain" id="PRO_0000037841" description="Non-structural protein 2A">
    <location>
        <begin position="1147"/>
        <end position="1373"/>
    </location>
</feature>
<feature type="chain" id="PRO_0000037842" description="Serine protease subunit NS2B">
    <location>
        <begin position="1374"/>
        <end position="1504"/>
    </location>
</feature>
<feature type="chain" id="PRO_0000037843" description="Serine protease NS3">
    <location>
        <begin position="1505"/>
        <end position="2123"/>
    </location>
</feature>
<feature type="chain" id="PRO_0000037844" description="Non-structural protein 4A">
    <location>
        <begin position="2124"/>
        <end position="2249"/>
    </location>
</feature>
<feature type="peptide" id="PRO_0000405191" description="Peptide 2k">
    <location>
        <begin position="2250"/>
        <end position="2272"/>
    </location>
</feature>
<feature type="chain" id="PRO_0000037845" description="Non-structural protein 4B">
    <location>
        <begin position="2273"/>
        <end position="2527"/>
    </location>
</feature>
<feature type="chain" id="PRO_0000037846" description="RNA-directed RNA polymerase NS5">
    <location>
        <begin position="2528"/>
        <end position="3432"/>
    </location>
</feature>
<feature type="topological domain" description="Cytoplasmic" evidence="11">
    <location>
        <begin position="2"/>
        <end position="109"/>
    </location>
</feature>
<feature type="transmembrane region" description="Helical" evidence="11">
    <location>
        <begin position="110"/>
        <end position="130"/>
    </location>
</feature>
<feature type="topological domain" description="Extracellular" evidence="11">
    <location>
        <begin position="131"/>
        <end position="253"/>
    </location>
</feature>
<feature type="transmembrane region" description="Helical" evidence="11">
    <location>
        <begin position="254"/>
        <end position="274"/>
    </location>
</feature>
<feature type="topological domain" description="Cytoplasmic" evidence="11">
    <location>
        <begin position="275"/>
        <end position="279"/>
    </location>
</feature>
<feature type="transmembrane region" description="Helical" evidence="26">
    <location>
        <begin position="280"/>
        <end position="294"/>
    </location>
</feature>
<feature type="topological domain" description="Extracellular" evidence="11">
    <location>
        <begin position="295"/>
        <end position="746"/>
    </location>
</feature>
<feature type="transmembrane region" description="Helical" evidence="11">
    <location>
        <begin position="747"/>
        <end position="767"/>
    </location>
</feature>
<feature type="topological domain" description="Cytoplasmic" evidence="11">
    <location>
        <begin position="768"/>
        <end position="773"/>
    </location>
</feature>
<feature type="transmembrane region" description="Helical" evidence="11">
    <location>
        <begin position="774"/>
        <end position="794"/>
    </location>
</feature>
<feature type="topological domain" description="Extracellular" evidence="11">
    <location>
        <begin position="795"/>
        <end position="1219"/>
    </location>
</feature>
<feature type="transmembrane region" description="Helical" evidence="11">
    <location>
        <begin position="1220"/>
        <end position="1240"/>
    </location>
</feature>
<feature type="topological domain" description="Cytoplasmic" evidence="11">
    <location>
        <begin position="1241"/>
        <end position="1250"/>
    </location>
</feature>
<feature type="transmembrane region" description="Helical" evidence="11">
    <location>
        <begin position="1251"/>
        <end position="1271"/>
    </location>
</feature>
<feature type="topological domain" description="Lumenal" evidence="11">
    <location>
        <position position="1272"/>
    </location>
</feature>
<feature type="transmembrane region" description="Helical" evidence="11">
    <location>
        <begin position="1273"/>
        <end position="1293"/>
    </location>
</feature>
<feature type="topological domain" description="Cytoplasmic" evidence="11">
    <location>
        <begin position="1294"/>
        <end position="1309"/>
    </location>
</feature>
<feature type="transmembrane region" description="Helical" evidence="11">
    <location>
        <begin position="1310"/>
        <end position="1330"/>
    </location>
</feature>
<feature type="topological domain" description="Lumenal" evidence="11">
    <location>
        <begin position="1331"/>
        <end position="1341"/>
    </location>
</feature>
<feature type="transmembrane region" description="Helical" evidence="11">
    <location>
        <begin position="1342"/>
        <end position="1362"/>
    </location>
</feature>
<feature type="topological domain" description="Cytoplasmic" evidence="11">
    <location>
        <begin position="1363"/>
        <end position="1374"/>
    </location>
</feature>
<feature type="transmembrane region" description="Helical" evidence="11">
    <location>
        <begin position="1375"/>
        <end position="1395"/>
    </location>
</feature>
<feature type="topological domain" description="Lumenal" evidence="11">
    <location>
        <begin position="1396"/>
        <end position="1398"/>
    </location>
</feature>
<feature type="transmembrane region" description="Helical" evidence="11">
    <location>
        <begin position="1399"/>
        <end position="1419"/>
    </location>
</feature>
<feature type="topological domain" description="Cytoplasmic" evidence="11">
    <location>
        <begin position="1420"/>
        <end position="1476"/>
    </location>
</feature>
<feature type="intramembrane region" description="Helical" evidence="11">
    <location>
        <begin position="1477"/>
        <end position="1497"/>
    </location>
</feature>
<feature type="topological domain" description="Cytoplasmic" evidence="11">
    <location>
        <begin position="1498"/>
        <end position="2173"/>
    </location>
</feature>
<feature type="transmembrane region" description="Helical" evidence="11">
    <location>
        <begin position="2174"/>
        <end position="2194"/>
    </location>
</feature>
<feature type="topological domain" description="Lumenal" evidence="11">
    <location>
        <begin position="2195"/>
        <end position="2199"/>
    </location>
</feature>
<feature type="intramembrane region" description="Helical" evidence="11">
    <location>
        <begin position="2200"/>
        <end position="2220"/>
    </location>
</feature>
<feature type="topological domain" description="Lumenal" evidence="11">
    <location>
        <position position="2221"/>
    </location>
</feature>
<feature type="transmembrane region" description="Helical" evidence="11">
    <location>
        <begin position="2222"/>
        <end position="2242"/>
    </location>
</feature>
<feature type="topological domain" description="Cytoplasmic" evidence="11">
    <location>
        <begin position="2243"/>
        <end position="2257"/>
    </location>
</feature>
<feature type="transmembrane region" description="Helical; Note=Signal for NS4B" evidence="11">
    <location>
        <begin position="2258"/>
        <end position="2278"/>
    </location>
</feature>
<feature type="topological domain" description="Lumenal" evidence="11">
    <location>
        <begin position="2279"/>
        <end position="2311"/>
    </location>
</feature>
<feature type="intramembrane region" description="Helical" evidence="11">
    <location>
        <begin position="2312"/>
        <end position="2332"/>
    </location>
</feature>
<feature type="topological domain" description="Lumenal" evidence="11">
    <location>
        <begin position="2333"/>
        <end position="2368"/>
    </location>
</feature>
<feature type="transmembrane region" description="Helical" evidence="11">
    <location>
        <begin position="2369"/>
        <end position="2389"/>
    </location>
</feature>
<feature type="topological domain" description="Cytoplasmic" evidence="11">
    <location>
        <begin position="2390"/>
        <end position="2444"/>
    </location>
</feature>
<feature type="transmembrane region" description="Helical" evidence="11">
    <location>
        <begin position="2445"/>
        <end position="2465"/>
    </location>
</feature>
<feature type="topological domain" description="Lumenal" evidence="11">
    <location>
        <begin position="2466"/>
        <end position="2469"/>
    </location>
</feature>
<feature type="transmembrane region" description="Helical" evidence="11">
    <location>
        <begin position="2470"/>
        <end position="2490"/>
    </location>
</feature>
<feature type="topological domain" description="Cytoplasmic" evidence="11">
    <location>
        <begin position="2491"/>
        <end position="3432"/>
    </location>
</feature>
<feature type="domain" description="Peptidase S7" evidence="16">
    <location>
        <begin position="1505"/>
        <end position="1682"/>
    </location>
</feature>
<feature type="domain" description="Helicase ATP-binding" evidence="13">
    <location>
        <begin position="1685"/>
        <end position="1841"/>
    </location>
</feature>
<feature type="domain" description="Helicase C-terminal" evidence="14">
    <location>
        <begin position="1852"/>
        <end position="2017"/>
    </location>
</feature>
<feature type="domain" description="mRNA cap 0-1 NS5-type MT" evidence="17">
    <location>
        <begin position="2528"/>
        <end position="2793"/>
    </location>
</feature>
<feature type="domain" description="RdRp catalytic" evidence="12">
    <location>
        <begin position="3057"/>
        <end position="3209"/>
    </location>
</feature>
<feature type="region of interest" description="Interaction with host EXOC1" evidence="2">
    <location>
        <begin position="2"/>
        <end position="15"/>
    </location>
</feature>
<feature type="region of interest" description="Hydrophobic; homodimerization of capsid protein C" evidence="7">
    <location>
        <begin position="37"/>
        <end position="72"/>
    </location>
</feature>
<feature type="region of interest" description="Fusion peptide" evidence="4">
    <location>
        <begin position="392"/>
        <end position="405"/>
    </location>
</feature>
<feature type="region of interest" description="Interaction with human SPCS1" evidence="24">
    <location>
        <begin position="1374"/>
        <end position="1423"/>
    </location>
</feature>
<feature type="region of interest" description="Interacts with and activates NS3 protease" evidence="15">
    <location>
        <begin position="1427"/>
        <end position="1466"/>
    </location>
</feature>
<feature type="region of interest" description="Interaction with human SPCS1" evidence="24">
    <location>
        <begin position="1458"/>
        <end position="1505"/>
    </location>
</feature>
<feature type="region of interest" description="Important for RNA-binding" evidence="5">
    <location>
        <begin position="1689"/>
        <end position="1692"/>
    </location>
</feature>
<feature type="region of interest" description="Disordered" evidence="18">
    <location>
        <begin position="1950"/>
        <end position="1972"/>
    </location>
</feature>
<feature type="region of interest" description="Regulates the ATPase activity of NS3 helicase" evidence="10">
    <location>
        <begin position="2168"/>
        <end position="2172"/>
    </location>
</feature>
<feature type="short sequence motif" description="DEAH box" evidence="13">
    <location>
        <begin position="1789"/>
        <end position="1792"/>
    </location>
</feature>
<feature type="active site" description="Charge relay system; for serine protease NS3 activity" evidence="16">
    <location>
        <position position="1555"/>
    </location>
</feature>
<feature type="active site" description="Charge relay system; for serine protease NS3 activity" evidence="16">
    <location>
        <position position="1579"/>
    </location>
</feature>
<feature type="active site" description="Charge relay system; for serine protease NS3 activity" evidence="16">
    <location>
        <position position="1639"/>
    </location>
</feature>
<feature type="active site" description="For 2'-O-MTase activity" evidence="9">
    <location>
        <position position="2588"/>
    </location>
</feature>
<feature type="active site" description="For 2'-O-MTase activity" evidence="9">
    <location>
        <position position="2673"/>
    </location>
</feature>
<feature type="active site" description="For 2'-O-MTase activity" evidence="9">
    <location>
        <position position="2709"/>
    </location>
</feature>
<feature type="active site" description="For 2'-O-MTase activity" evidence="9">
    <location>
        <position position="2745"/>
    </location>
</feature>
<feature type="binding site" evidence="13">
    <location>
        <begin position="1698"/>
        <end position="1705"/>
    </location>
    <ligand>
        <name>ATP</name>
        <dbReference type="ChEBI" id="CHEBI:30616"/>
    </ligand>
</feature>
<feature type="binding site" evidence="17">
    <location>
        <position position="2583"/>
    </location>
    <ligand>
        <name>S-adenosyl-L-methionine</name>
        <dbReference type="ChEBI" id="CHEBI:59789"/>
    </ligand>
</feature>
<feature type="binding site" evidence="17">
    <location>
        <position position="2613"/>
    </location>
    <ligand>
        <name>S-adenosyl-L-methionine</name>
        <dbReference type="ChEBI" id="CHEBI:59789"/>
    </ligand>
</feature>
<feature type="binding site" evidence="17">
    <location>
        <position position="2614"/>
    </location>
    <ligand>
        <name>S-adenosyl-L-methionine</name>
        <dbReference type="ChEBI" id="CHEBI:59789"/>
    </ligand>
</feature>
<feature type="binding site" evidence="17">
    <location>
        <position position="2631"/>
    </location>
    <ligand>
        <name>S-adenosyl-L-methionine</name>
        <dbReference type="ChEBI" id="CHEBI:59789"/>
    </ligand>
</feature>
<feature type="binding site" evidence="17">
    <location>
        <position position="2632"/>
    </location>
    <ligand>
        <name>S-adenosyl-L-methionine</name>
        <dbReference type="ChEBI" id="CHEBI:59789"/>
    </ligand>
</feature>
<feature type="binding site" evidence="17">
    <location>
        <position position="2658"/>
    </location>
    <ligand>
        <name>S-adenosyl-L-methionine</name>
        <dbReference type="ChEBI" id="CHEBI:59789"/>
    </ligand>
</feature>
<feature type="binding site" evidence="17">
    <location>
        <position position="2659"/>
    </location>
    <ligand>
        <name>S-adenosyl-L-methionine</name>
        <dbReference type="ChEBI" id="CHEBI:59789"/>
    </ligand>
</feature>
<feature type="binding site" evidence="17">
    <location>
        <position position="2674"/>
    </location>
    <ligand>
        <name>S-adenosyl-L-methionine</name>
        <dbReference type="ChEBI" id="CHEBI:59789"/>
    </ligand>
</feature>
<feature type="binding site" evidence="17">
    <location>
        <position position="2747"/>
    </location>
    <ligand>
        <name>S-adenosyl-L-methionine</name>
        <dbReference type="ChEBI" id="CHEBI:59789"/>
    </ligand>
</feature>
<feature type="binding site" evidence="22">
    <location>
        <position position="2967"/>
    </location>
    <ligand>
        <name>Zn(2+)</name>
        <dbReference type="ChEBI" id="CHEBI:29105"/>
        <label>1</label>
    </ligand>
</feature>
<feature type="binding site" evidence="22">
    <location>
        <position position="2971"/>
    </location>
    <ligand>
        <name>Zn(2+)</name>
        <dbReference type="ChEBI" id="CHEBI:29105"/>
        <label>1</label>
    </ligand>
</feature>
<feature type="binding site" evidence="22">
    <location>
        <position position="2976"/>
    </location>
    <ligand>
        <name>Zn(2+)</name>
        <dbReference type="ChEBI" id="CHEBI:29105"/>
        <label>1</label>
    </ligand>
</feature>
<feature type="binding site" evidence="22">
    <location>
        <position position="2979"/>
    </location>
    <ligand>
        <name>Zn(2+)</name>
        <dbReference type="ChEBI" id="CHEBI:29105"/>
        <label>1</label>
    </ligand>
</feature>
<feature type="binding site" evidence="22">
    <location>
        <position position="3244"/>
    </location>
    <ligand>
        <name>Zn(2+)</name>
        <dbReference type="ChEBI" id="CHEBI:29105"/>
        <label>2</label>
    </ligand>
</feature>
<feature type="binding site" evidence="22">
    <location>
        <position position="3260"/>
    </location>
    <ligand>
        <name>Zn(2+)</name>
        <dbReference type="ChEBI" id="CHEBI:29105"/>
        <label>2</label>
    </ligand>
</feature>
<feature type="binding site" evidence="22">
    <location>
        <position position="3379"/>
    </location>
    <ligand>
        <name>Zn(2+)</name>
        <dbReference type="ChEBI" id="CHEBI:29105"/>
        <label>2</label>
    </ligand>
</feature>
<feature type="site" description="Cleavage; by viral protease NS3" evidence="2">
    <location>
        <begin position="105"/>
        <end position="106"/>
    </location>
</feature>
<feature type="site" description="Cleavage; by host signal peptidase" evidence="2">
    <location>
        <begin position="127"/>
        <end position="128"/>
    </location>
</feature>
<feature type="site" description="Cleavage; by host furin" evidence="2">
    <location>
        <begin position="219"/>
        <end position="220"/>
    </location>
</feature>
<feature type="site" description="Cleavage; by host signal peptidase" evidence="2">
    <location>
        <begin position="294"/>
        <end position="295"/>
    </location>
</feature>
<feature type="site" description="Cleavage; by host signal peptidase" evidence="2">
    <location>
        <begin position="794"/>
        <end position="795"/>
    </location>
</feature>
<feature type="site" description="Cleavage; by host" evidence="2">
    <location>
        <begin position="1146"/>
        <end position="1147"/>
    </location>
</feature>
<feature type="site" description="Cleavage; by viral protease NS3" evidence="2">
    <location>
        <begin position="1373"/>
        <end position="1374"/>
    </location>
</feature>
<feature type="site" description="Cleavage; by autolysis" evidence="2">
    <location>
        <begin position="1504"/>
        <end position="1505"/>
    </location>
</feature>
<feature type="site" description="Involved in NS3 ATPase and RTPase activities" evidence="3">
    <location>
        <position position="1962"/>
    </location>
</feature>
<feature type="site" description="Involved in NS3 ATPase and RTPase activities" evidence="3">
    <location>
        <position position="1965"/>
    </location>
</feature>
<feature type="site" description="Cleavage; by autolysis" evidence="2">
    <location>
        <begin position="2123"/>
        <end position="2124"/>
    </location>
</feature>
<feature type="site" description="Cleavage; by viral protease NS3" evidence="2">
    <location>
        <begin position="2249"/>
        <end position="2250"/>
    </location>
</feature>
<feature type="site" description="Cleavage; by host signal peptidase" evidence="2">
    <location>
        <begin position="2272"/>
        <end position="2273"/>
    </location>
</feature>
<feature type="site" description="Cleavage; by viral protease NS3" evidence="2">
    <location>
        <begin position="2527"/>
        <end position="2528"/>
    </location>
</feature>
<feature type="site" description="mRNA cap binding" evidence="17">
    <location>
        <position position="2540"/>
    </location>
</feature>
<feature type="site" description="mRNA cap binding; via carbonyl oxygen" evidence="17">
    <location>
        <position position="2543"/>
    </location>
</feature>
<feature type="site" description="mRNA cap binding" evidence="17">
    <location>
        <position position="2544"/>
    </location>
</feature>
<feature type="site" description="mRNA cap binding; via carbonyl oxygen" evidence="17">
    <location>
        <position position="2546"/>
    </location>
</feature>
<feature type="site" description="mRNA cap binding" evidence="17">
    <location>
        <position position="2551"/>
    </location>
</feature>
<feature type="site" description="mRNA cap binding" evidence="17">
    <location>
        <position position="2555"/>
    </location>
</feature>
<feature type="site" description="Essential for 2'-O-methyltransferase activity" evidence="17">
    <location>
        <position position="2588"/>
    </location>
</feature>
<feature type="site" description="Essential for 2'-O-methyltransferase and N-7 methyltransferase activity" evidence="17">
    <location>
        <position position="2673"/>
    </location>
</feature>
<feature type="site" description="mRNA cap binding" evidence="17">
    <location>
        <position position="2677"/>
    </location>
</feature>
<feature type="site" description="Essential for 2'-O-methyltransferase activity" evidence="17">
    <location>
        <position position="2709"/>
    </location>
</feature>
<feature type="site" description="mRNA cap binding" evidence="17">
    <location>
        <position position="2740"/>
    </location>
</feature>
<feature type="site" description="mRNA cap binding" evidence="17">
    <location>
        <position position="2742"/>
    </location>
</feature>
<feature type="site" description="Essential for 2'-O-methyltransferase activity" evidence="17">
    <location>
        <position position="2745"/>
    </location>
</feature>
<feature type="modified residue" description="N6-acetyllysine; by host" evidence="8">
    <location>
        <position position="1893"/>
    </location>
</feature>
<feature type="modified residue" description="Phosphoserine" evidence="1">
    <location>
        <position position="2583"/>
    </location>
</feature>
<feature type="glycosylation site" description="N-linked (GlcNAc...) asparagine; by host" evidence="3">
    <location>
        <position position="142"/>
    </location>
</feature>
<feature type="glycosylation site" description="N-linked (GlcNAc...) asparagine; by host" evidence="11">
    <location>
        <position position="448"/>
    </location>
</feature>
<feature type="glycosylation site" description="N-linked (GlcNAc...) asparagine; by host" evidence="10">
    <location>
        <position position="924"/>
    </location>
</feature>
<feature type="glycosylation site" description="N-linked (GlcNAc...) asparagine; by host" evidence="10">
    <location>
        <position position="1001"/>
    </location>
</feature>
<feature type="disulfide bond" evidence="10">
    <location>
        <begin position="297"/>
        <end position="324"/>
    </location>
</feature>
<feature type="disulfide bond" evidence="10">
    <location>
        <begin position="354"/>
        <end position="415"/>
    </location>
</feature>
<feature type="disulfide bond" evidence="2">
    <location>
        <begin position="354"/>
        <end position="410"/>
    </location>
</feature>
<feature type="disulfide bond" evidence="10">
    <location>
        <begin position="368"/>
        <end position="399"/>
    </location>
</feature>
<feature type="disulfide bond" evidence="2">
    <location>
        <begin position="386"/>
        <end position="415"/>
    </location>
</feature>
<feature type="disulfide bond" evidence="10">
    <location>
        <begin position="386"/>
        <end position="410"/>
    </location>
</feature>
<feature type="disulfide bond" evidence="10">
    <location>
        <begin position="484"/>
        <end position="581"/>
    </location>
</feature>
<feature type="disulfide bond" evidence="10">
    <location>
        <begin position="598"/>
        <end position="629"/>
    </location>
</feature>
<feature type="disulfide bond" evidence="10">
    <location>
        <begin position="798"/>
        <end position="809"/>
    </location>
</feature>
<feature type="disulfide bond" evidence="10">
    <location>
        <begin position="849"/>
        <end position="937"/>
    </location>
</feature>
<feature type="disulfide bond" evidence="10">
    <location>
        <begin position="973"/>
        <end position="1017"/>
    </location>
</feature>
<feature type="disulfide bond" evidence="10">
    <location>
        <begin position="1074"/>
        <end position="1123"/>
    </location>
</feature>
<feature type="disulfide bond" evidence="10">
    <location>
        <begin position="1085"/>
        <end position="1106"/>
    </location>
</feature>
<feature type="disulfide bond" evidence="10">
    <location>
        <begin position="1107"/>
        <end position="1110"/>
    </location>
</feature>
<feature type="mutagenesis site" description="No effect on human SPCS1 binding." evidence="24">
    <original>E</original>
    <variation>A</variation>
    <location>
        <position position="1379"/>
    </location>
</feature>
<feature type="mutagenesis site" description="Reduces human SPCS1 binding." evidence="24">
    <original>G</original>
    <variation>A</variation>
    <location>
        <position position="1385"/>
    </location>
</feature>
<feature type="mutagenesis site" description="Slightly reduces human SPCS1 binding." evidence="24">
    <original>P</original>
    <variation>A</variation>
    <location>
        <position position="1405"/>
    </location>
</feature>
<feature type="mutagenesis site" description="Slightly reduces human SPCS1 binding." evidence="24">
    <original>G</original>
    <variation>A</variation>
    <location>
        <position position="1410"/>
    </location>
</feature>
<feature type="mutagenesis site" description="Slightly reduces human SPCS1 binding." evidence="24">
    <original>G</original>
    <variation>A</variation>
    <location>
        <position position="1420"/>
    </location>
</feature>
<feature type="mutagenesis site" description="Reduces SPCS1 human binding." evidence="24">
    <original>P</original>
    <variation>A</variation>
    <location>
        <position position="1485"/>
    </location>
</feature>
<feature type="mutagenesis site" description="Slightly reduces human SPCS1 binding." evidence="24">
    <original>I</original>
    <variation>A</variation>
    <location>
        <position position="1488"/>
    </location>
</feature>
<feature type="mutagenesis site" description="Complete loss of both the ATPase and helicase activities." evidence="21">
    <original>G</original>
    <variation>A</variation>
    <location>
        <position position="1703"/>
    </location>
</feature>
<feature type="mutagenesis site" description="Complete loss of both the ATPase and helicase activities." evidence="21">
    <original>K</original>
    <variation>D</variation>
    <variation>E</variation>
    <variation>H</variation>
    <variation>N</variation>
    <variation>Q</variation>
    <variation>R</variation>
    <location>
        <position position="1704"/>
    </location>
</feature>
<feature type="mutagenesis site" description="Complete loss of both the ATPase and helicase activities." evidence="21">
    <original>T</original>
    <variation>A</variation>
    <location>
        <position position="1705"/>
    </location>
</feature>
<feature type="mutagenesis site" description="80% loss of ATPase activity." evidence="21">
    <original>Q</original>
    <variation>A</variation>
    <location>
        <position position="1961"/>
    </location>
</feature>
<feature type="mutagenesis site" description="90% loss of ATPase activity." evidence="21">
    <original>R</original>
    <variation>A</variation>
    <location>
        <position position="1962"/>
    </location>
</feature>
<feature type="mutagenesis site" description="Complete loss of ATPase activity." evidence="21">
    <original>R</original>
    <variation>A</variation>
    <location>
        <position position="1965"/>
    </location>
</feature>
<feature type="mutagenesis site" description="Complete loss of ATPase activity." evidence="21">
    <original>R</original>
    <variation>A</variation>
    <location>
        <position position="1968"/>
    </location>
</feature>
<feature type="helix" evidence="39">
    <location>
        <begin position="29"/>
        <end position="38"/>
    </location>
</feature>
<feature type="helix" evidence="39">
    <location>
        <begin position="44"/>
        <end position="57"/>
    </location>
</feature>
<feature type="helix" evidence="39">
    <location>
        <begin position="63"/>
        <end position="70"/>
    </location>
</feature>
<feature type="helix" evidence="39">
    <location>
        <begin position="74"/>
        <end position="96"/>
    </location>
</feature>
<feature type="strand" evidence="35">
    <location>
        <begin position="301"/>
        <end position="307"/>
    </location>
</feature>
<feature type="strand" evidence="35">
    <location>
        <begin position="313"/>
        <end position="322"/>
    </location>
</feature>
<feature type="strand" evidence="35">
    <location>
        <begin position="324"/>
        <end position="328"/>
    </location>
</feature>
<feature type="strand" evidence="35">
    <location>
        <begin position="335"/>
        <end position="344"/>
    </location>
</feature>
<feature type="strand" evidence="35">
    <location>
        <begin position="348"/>
        <end position="366"/>
    </location>
</feature>
<feature type="helix" evidence="35">
    <location>
        <begin position="377"/>
        <end position="380"/>
    </location>
</feature>
<feature type="strand" evidence="35">
    <location>
        <begin position="384"/>
        <end position="394"/>
    </location>
</feature>
<feature type="helix" evidence="35">
    <location>
        <begin position="395"/>
        <end position="397"/>
    </location>
</feature>
<feature type="strand" evidence="35">
    <location>
        <begin position="403"/>
        <end position="423"/>
    </location>
</feature>
<feature type="strand" evidence="35">
    <location>
        <begin position="428"/>
        <end position="437"/>
    </location>
</feature>
<feature type="turn" evidence="35">
    <location>
        <begin position="443"/>
        <end position="447"/>
    </location>
</feature>
<feature type="helix" evidence="35">
    <location>
        <begin position="449"/>
        <end position="454"/>
    </location>
</feature>
<feature type="strand" evidence="35">
    <location>
        <begin position="458"/>
        <end position="463"/>
    </location>
</feature>
<feature type="strand" evidence="35">
    <location>
        <begin position="465"/>
        <end position="467"/>
    </location>
</feature>
<feature type="strand" evidence="35">
    <location>
        <begin position="469"/>
        <end position="473"/>
    </location>
</feature>
<feature type="helix" evidence="35">
    <location>
        <begin position="475"/>
        <end position="477"/>
    </location>
</feature>
<feature type="strand" evidence="35">
    <location>
        <begin position="478"/>
        <end position="485"/>
    </location>
</feature>
<feature type="helix" evidence="35">
    <location>
        <begin position="486"/>
        <end position="488"/>
    </location>
</feature>
<feature type="strand" evidence="35">
    <location>
        <begin position="494"/>
        <end position="500"/>
    </location>
</feature>
<feature type="strand" evidence="35">
    <location>
        <begin position="503"/>
        <end position="508"/>
    </location>
</feature>
<feature type="turn" evidence="35">
    <location>
        <begin position="509"/>
        <end position="514"/>
    </location>
</feature>
<feature type="strand" evidence="35">
    <location>
        <begin position="519"/>
        <end position="521"/>
    </location>
</feature>
<feature type="strand" evidence="35">
    <location>
        <begin position="524"/>
        <end position="528"/>
    </location>
</feature>
<feature type="helix" evidence="35">
    <location>
        <begin position="530"/>
        <end position="533"/>
    </location>
</feature>
<feature type="strand" evidence="35">
    <location>
        <begin position="534"/>
        <end position="540"/>
    </location>
</feature>
<feature type="strand" evidence="35">
    <location>
        <begin position="543"/>
        <end position="548"/>
    </location>
</feature>
<feature type="helix" evidence="35">
    <location>
        <begin position="553"/>
        <end position="559"/>
    </location>
</feature>
<feature type="strand" evidence="35">
    <location>
        <begin position="561"/>
        <end position="575"/>
    </location>
</feature>
<feature type="strand" evidence="35">
    <location>
        <begin position="578"/>
        <end position="584"/>
    </location>
</feature>
<feature type="turn" evidence="35">
    <location>
        <begin position="591"/>
        <end position="594"/>
    </location>
</feature>
<feature type="strand" evidence="35">
    <location>
        <begin position="602"/>
        <end position="610"/>
    </location>
</feature>
<feature type="strand" evidence="35">
    <location>
        <begin position="612"/>
        <end position="614"/>
    </location>
</feature>
<feature type="strand" evidence="35">
    <location>
        <begin position="616"/>
        <end position="622"/>
    </location>
</feature>
<feature type="strand" evidence="35">
    <location>
        <begin position="628"/>
        <end position="630"/>
    </location>
</feature>
<feature type="strand" evidence="35">
    <location>
        <begin position="633"/>
        <end position="638"/>
    </location>
</feature>
<feature type="strand" evidence="35">
    <location>
        <begin position="641"/>
        <end position="644"/>
    </location>
</feature>
<feature type="strand" evidence="35">
    <location>
        <begin position="646"/>
        <end position="650"/>
    </location>
</feature>
<feature type="strand" evidence="35">
    <location>
        <begin position="662"/>
        <end position="669"/>
    </location>
</feature>
<feature type="strand" evidence="35">
    <location>
        <begin position="672"/>
        <end position="681"/>
    </location>
</feature>
<feature type="helix" evidence="35">
    <location>
        <begin position="682"/>
        <end position="684"/>
    </location>
</feature>
<feature type="strand" evidence="35">
    <location>
        <begin position="686"/>
        <end position="692"/>
    </location>
</feature>
<feature type="helix" evidence="38">
    <location>
        <begin position="975"/>
        <end position="977"/>
    </location>
</feature>
<feature type="strand" evidence="38">
    <location>
        <begin position="978"/>
        <end position="983"/>
    </location>
</feature>
<feature type="strand" evidence="38">
    <location>
        <begin position="986"/>
        <end position="1013"/>
    </location>
</feature>
<feature type="helix" evidence="38">
    <location>
        <begin position="1021"/>
        <end position="1023"/>
    </location>
</feature>
<feature type="helix" evidence="38">
    <location>
        <begin position="1032"/>
        <end position="1034"/>
    </location>
</feature>
<feature type="helix" evidence="38">
    <location>
        <begin position="1039"/>
        <end position="1041"/>
    </location>
</feature>
<feature type="strand" evidence="38">
    <location>
        <begin position="1064"/>
        <end position="1066"/>
    </location>
</feature>
<feature type="strand" evidence="38">
    <location>
        <begin position="1068"/>
        <end position="1072"/>
    </location>
</feature>
<feature type="strand" evidence="38">
    <location>
        <begin position="1078"/>
        <end position="1081"/>
    </location>
</feature>
<feature type="strand" evidence="38">
    <location>
        <begin position="1092"/>
        <end position="1095"/>
    </location>
</feature>
<feature type="strand" evidence="38">
    <location>
        <begin position="1104"/>
        <end position="1109"/>
    </location>
</feature>
<feature type="strand" evidence="38">
    <location>
        <begin position="1115"/>
        <end position="1119"/>
    </location>
</feature>
<feature type="strand" evidence="38">
    <location>
        <begin position="1122"/>
        <end position="1125"/>
    </location>
</feature>
<feature type="helix" evidence="34">
    <location>
        <begin position="1686"/>
        <end position="1688"/>
    </location>
</feature>
<feature type="strand" evidence="34">
    <location>
        <begin position="1693"/>
        <end position="1696"/>
    </location>
</feature>
<feature type="turn" evidence="34">
    <location>
        <begin position="1704"/>
        <end position="1707"/>
    </location>
</feature>
<feature type="helix" evidence="34">
    <location>
        <begin position="1708"/>
        <end position="1718"/>
    </location>
</feature>
<feature type="strand" evidence="34">
    <location>
        <begin position="1723"/>
        <end position="1727"/>
    </location>
</feature>
<feature type="helix" evidence="34">
    <location>
        <begin position="1730"/>
        <end position="1739"/>
    </location>
</feature>
<feature type="turn" evidence="34">
    <location>
        <begin position="1740"/>
        <end position="1742"/>
    </location>
</feature>
<feature type="strand" evidence="34">
    <location>
        <begin position="1745"/>
        <end position="1747"/>
    </location>
</feature>
<feature type="strand" evidence="34">
    <location>
        <begin position="1761"/>
        <end position="1766"/>
    </location>
</feature>
<feature type="helix" evidence="34">
    <location>
        <begin position="1767"/>
        <end position="1775"/>
    </location>
</feature>
<feature type="strand" evidence="34">
    <location>
        <begin position="1784"/>
        <end position="1790"/>
    </location>
</feature>
<feature type="helix" evidence="34">
    <location>
        <begin position="1796"/>
        <end position="1810"/>
    </location>
</feature>
<feature type="strand" evidence="34">
    <location>
        <begin position="1815"/>
        <end position="1819"/>
    </location>
</feature>
<feature type="strand" evidence="34">
    <location>
        <begin position="1837"/>
        <end position="1841"/>
    </location>
</feature>
<feature type="helix" evidence="34">
    <location>
        <begin position="1854"/>
        <end position="1858"/>
    </location>
</feature>
<feature type="strand" evidence="34">
    <location>
        <begin position="1863"/>
        <end position="1866"/>
    </location>
</feature>
<feature type="helix" evidence="34">
    <location>
        <begin position="1870"/>
        <end position="1882"/>
    </location>
</feature>
<feature type="strand" evidence="34">
    <location>
        <begin position="1887"/>
        <end position="1891"/>
    </location>
</feature>
<feature type="helix" evidence="34">
    <location>
        <begin position="1894"/>
        <end position="1898"/>
    </location>
</feature>
<feature type="helix" evidence="34">
    <location>
        <begin position="1899"/>
        <end position="1901"/>
    </location>
</feature>
<feature type="strand" evidence="34">
    <location>
        <begin position="1902"/>
        <end position="1904"/>
    </location>
</feature>
<feature type="strand" evidence="34">
    <location>
        <begin position="1908"/>
        <end position="1914"/>
    </location>
</feature>
<feature type="strand" evidence="34">
    <location>
        <begin position="1925"/>
        <end position="1929"/>
    </location>
</feature>
<feature type="strand" evidence="34">
    <location>
        <begin position="1936"/>
        <end position="1939"/>
    </location>
</feature>
<feature type="strand" evidence="34">
    <location>
        <begin position="1941"/>
        <end position="1943"/>
    </location>
</feature>
<feature type="strand" evidence="34">
    <location>
        <begin position="1945"/>
        <end position="1948"/>
    </location>
</feature>
<feature type="helix" evidence="34">
    <location>
        <begin position="1956"/>
        <end position="1963"/>
    </location>
</feature>
<feature type="strand" evidence="34">
    <location>
        <begin position="1975"/>
        <end position="1979"/>
    </location>
</feature>
<feature type="helix" evidence="34">
    <location>
        <begin position="1991"/>
        <end position="2001"/>
    </location>
</feature>
<feature type="helix" evidence="34">
    <location>
        <begin position="2015"/>
        <end position="2020"/>
    </location>
</feature>
<feature type="turn" evidence="34">
    <location>
        <begin position="2025"/>
        <end position="2028"/>
    </location>
</feature>
<feature type="helix" evidence="34">
    <location>
        <begin position="2032"/>
        <end position="2043"/>
    </location>
</feature>
<feature type="helix" evidence="34">
    <location>
        <begin position="2049"/>
        <end position="2057"/>
    </location>
</feature>
<feature type="helix" evidence="34">
    <location>
        <begin position="2066"/>
        <end position="2068"/>
    </location>
</feature>
<feature type="helix" evidence="34">
    <location>
        <begin position="2073"/>
        <end position="2075"/>
    </location>
</feature>
<feature type="strand" evidence="34">
    <location>
        <begin position="2085"/>
        <end position="2087"/>
    </location>
</feature>
<feature type="strand" evidence="34">
    <location>
        <begin position="2093"/>
        <end position="2095"/>
    </location>
</feature>
<feature type="strand" evidence="34">
    <location>
        <begin position="2099"/>
        <end position="2102"/>
    </location>
</feature>
<feature type="helix" evidence="34">
    <location>
        <begin position="2103"/>
        <end position="2106"/>
    </location>
</feature>
<feature type="helix" evidence="34">
    <location>
        <begin position="2109"/>
        <end position="2120"/>
    </location>
</feature>
<feature type="helix" evidence="37">
    <location>
        <begin position="2535"/>
        <end position="2544"/>
    </location>
</feature>
<feature type="helix" evidence="37">
    <location>
        <begin position="2548"/>
        <end position="2554"/>
    </location>
</feature>
<feature type="turn" evidence="37">
    <location>
        <begin position="2555"/>
        <end position="2558"/>
    </location>
</feature>
<feature type="strand" evidence="37">
    <location>
        <begin position="2560"/>
        <end position="2562"/>
    </location>
</feature>
<feature type="helix" evidence="37">
    <location>
        <begin position="2565"/>
        <end position="2572"/>
    </location>
</feature>
<feature type="helix" evidence="37">
    <location>
        <begin position="2585"/>
        <end position="2593"/>
    </location>
</feature>
<feature type="turn" evidence="37">
    <location>
        <begin position="2594"/>
        <end position="2596"/>
    </location>
</feature>
<feature type="strand" evidence="37">
    <location>
        <begin position="2602"/>
        <end position="2607"/>
    </location>
</feature>
<feature type="helix" evidence="37">
    <location>
        <begin position="2613"/>
        <end position="2619"/>
    </location>
</feature>
<feature type="strand" evidence="37">
    <location>
        <begin position="2624"/>
        <end position="2630"/>
    </location>
</feature>
<feature type="helix" evidence="37">
    <location>
        <begin position="2648"/>
        <end position="2650"/>
    </location>
</feature>
<feature type="strand" evidence="37">
    <location>
        <begin position="2651"/>
        <end position="2654"/>
    </location>
</feature>
<feature type="helix" evidence="37">
    <location>
        <begin position="2659"/>
        <end position="2661"/>
    </location>
</feature>
<feature type="strand" evidence="37">
    <location>
        <begin position="2668"/>
        <end position="2672"/>
    </location>
</feature>
<feature type="helix" evidence="37">
    <location>
        <begin position="2681"/>
        <end position="2699"/>
    </location>
</feature>
<feature type="strand" evidence="37">
    <location>
        <begin position="2704"/>
        <end position="2711"/>
    </location>
</feature>
<feature type="helix" evidence="37">
    <location>
        <begin position="2716"/>
        <end position="2729"/>
    </location>
</feature>
<feature type="strand" evidence="37">
    <location>
        <begin position="2732"/>
        <end position="2734"/>
    </location>
</feature>
<feature type="strand" evidence="37">
    <location>
        <begin position="2746"/>
        <end position="2749"/>
    </location>
</feature>
<feature type="helix" evidence="37">
    <location>
        <begin position="2756"/>
        <end position="2770"/>
    </location>
</feature>
<feature type="strand" evidence="37">
    <location>
        <begin position="2780"/>
        <end position="2782"/>
    </location>
</feature>
<feature type="helix" evidence="36">
    <location>
        <begin position="2802"/>
        <end position="2816"/>
    </location>
</feature>
<feature type="turn" evidence="36">
    <location>
        <begin position="2817"/>
        <end position="2820"/>
    </location>
</feature>
<feature type="strand" evidence="36">
    <location>
        <begin position="2830"/>
        <end position="2839"/>
    </location>
</feature>
<feature type="helix" evidence="36">
    <location>
        <begin position="2852"/>
        <end position="2856"/>
    </location>
</feature>
<feature type="helix" evidence="36">
    <location>
        <begin position="2859"/>
        <end position="2863"/>
    </location>
</feature>
<feature type="helix" evidence="36">
    <location>
        <begin position="2865"/>
        <end position="2868"/>
    </location>
</feature>
<feature type="strand" evidence="37">
    <location>
        <begin position="2870"/>
        <end position="2872"/>
    </location>
</feature>
<feature type="helix" evidence="36">
    <location>
        <begin position="2877"/>
        <end position="2887"/>
    </location>
</feature>
<feature type="helix" evidence="36">
    <location>
        <begin position="2897"/>
        <end position="2914"/>
    </location>
</feature>
<feature type="turn" evidence="37">
    <location>
        <begin position="2915"/>
        <end position="2917"/>
    </location>
</feature>
<feature type="helix" evidence="36">
    <location>
        <begin position="2925"/>
        <end position="2932"/>
    </location>
</feature>
<feature type="turn" evidence="36">
    <location>
        <begin position="2933"/>
        <end position="2935"/>
    </location>
</feature>
<feature type="helix" evidence="37">
    <location>
        <begin position="2943"/>
        <end position="2945"/>
    </location>
</feature>
<feature type="turn" evidence="36">
    <location>
        <begin position="2946"/>
        <end position="2948"/>
    </location>
</feature>
<feature type="helix" evidence="36">
    <location>
        <begin position="2951"/>
        <end position="2956"/>
    </location>
</feature>
<feature type="helix" evidence="36">
    <location>
        <begin position="2958"/>
        <end position="2972"/>
    </location>
</feature>
<feature type="strand" evidence="36">
    <location>
        <begin position="2981"/>
        <end position="2987"/>
    </location>
</feature>
<feature type="strand" evidence="37">
    <location>
        <begin position="2989"/>
        <end position="2991"/>
    </location>
</feature>
<feature type="turn" evidence="36">
    <location>
        <begin position="2994"/>
        <end position="2996"/>
    </location>
</feature>
<feature type="strand" evidence="36">
    <location>
        <begin position="3001"/>
        <end position="3005"/>
    </location>
</feature>
<feature type="helix" evidence="36">
    <location>
        <begin position="3008"/>
        <end position="3018"/>
    </location>
</feature>
<feature type="helix" evidence="36">
    <location>
        <begin position="3020"/>
        <end position="3023"/>
    </location>
</feature>
<feature type="turn" evidence="36">
    <location>
        <begin position="3024"/>
        <end position="3027"/>
    </location>
</feature>
<feature type="helix" evidence="36">
    <location>
        <begin position="3029"/>
        <end position="3032"/>
    </location>
</feature>
<feature type="strand" evidence="36">
    <location>
        <begin position="3033"/>
        <end position="3035"/>
    </location>
</feature>
<feature type="helix" evidence="36">
    <location>
        <begin position="3041"/>
        <end position="3053"/>
    </location>
</feature>
<feature type="strand" evidence="36">
    <location>
        <begin position="3054"/>
        <end position="3057"/>
    </location>
</feature>
<feature type="helix" evidence="36">
    <location>
        <begin position="3067"/>
        <end position="3069"/>
    </location>
</feature>
<feature type="helix" evidence="36">
    <location>
        <begin position="3073"/>
        <end position="3079"/>
    </location>
</feature>
<feature type="helix" evidence="36">
    <location>
        <begin position="3080"/>
        <end position="3085"/>
    </location>
</feature>
<feature type="helix" evidence="36">
    <location>
        <begin position="3088"/>
        <end position="3100"/>
    </location>
</feature>
<feature type="turn" evidence="36">
    <location>
        <begin position="3101"/>
        <end position="3103"/>
    </location>
</feature>
<feature type="strand" evidence="36">
    <location>
        <begin position="3104"/>
        <end position="3113"/>
    </location>
</feature>
<feature type="turn" evidence="36">
    <location>
        <begin position="3114"/>
        <end position="3116"/>
    </location>
</feature>
<feature type="strand" evidence="36">
    <location>
        <begin position="3117"/>
        <end position="3126"/>
    </location>
</feature>
<feature type="helix" evidence="36">
    <location>
        <begin position="3136"/>
        <end position="3155"/>
    </location>
</feature>
<feature type="helix" evidence="36">
    <location>
        <begin position="3161"/>
        <end position="3163"/>
    </location>
</feature>
<feature type="helix" evidence="36">
    <location>
        <begin position="3169"/>
        <end position="3187"/>
    </location>
</feature>
<feature type="strand" evidence="36">
    <location>
        <begin position="3190"/>
        <end position="3193"/>
    </location>
</feature>
<feature type="strand" evidence="36">
    <location>
        <begin position="3196"/>
        <end position="3199"/>
    </location>
</feature>
<feature type="helix" evidence="36">
    <location>
        <begin position="3204"/>
        <end position="3208"/>
    </location>
</feature>
<feature type="helix" evidence="36">
    <location>
        <begin position="3211"/>
        <end position="3215"/>
    </location>
</feature>
<feature type="strand" evidence="37">
    <location>
        <begin position="3220"/>
        <end position="3223"/>
    </location>
</feature>
<feature type="strand" evidence="37">
    <location>
        <begin position="3232"/>
        <end position="3234"/>
    </location>
</feature>
<feature type="helix" evidence="36">
    <location>
        <begin position="3235"/>
        <end position="3237"/>
    </location>
</feature>
<feature type="strand" evidence="36">
    <location>
        <begin position="3243"/>
        <end position="3249"/>
    </location>
</feature>
<feature type="strand" evidence="36">
    <location>
        <begin position="3255"/>
        <end position="3260"/>
    </location>
</feature>
<feature type="helix" evidence="36">
    <location>
        <begin position="3263"/>
        <end position="3270"/>
    </location>
</feature>
<feature type="strand" evidence="37">
    <location>
        <begin position="3272"/>
        <end position="3275"/>
    </location>
</feature>
<feature type="helix" evidence="36">
    <location>
        <begin position="3280"/>
        <end position="3297"/>
    </location>
</feature>
<feature type="helix" evidence="36">
    <location>
        <begin position="3302"/>
        <end position="3314"/>
    </location>
</feature>
<feature type="strand" evidence="36">
    <location>
        <begin position="3336"/>
        <end position="3339"/>
    </location>
</feature>
<feature type="helix" evidence="36">
    <location>
        <begin position="3341"/>
        <end position="3349"/>
    </location>
</feature>
<feature type="turn" evidence="37">
    <location>
        <begin position="3350"/>
        <end position="3352"/>
    </location>
</feature>
<feature type="helix" evidence="36">
    <location>
        <begin position="3365"/>
        <end position="3367"/>
    </location>
</feature>
<feature type="helix" evidence="36">
    <location>
        <begin position="3373"/>
        <end position="3378"/>
    </location>
</feature>
<feature type="helix" evidence="36">
    <location>
        <begin position="3386"/>
        <end position="3406"/>
    </location>
</feature>
<feature type="helix" evidence="37">
    <location>
        <begin position="3415"/>
        <end position="3417"/>
    </location>
</feature>
<feature type="helix" evidence="37">
    <location>
        <begin position="3419"/>
        <end position="3421"/>
    </location>
</feature>
<proteinExistence type="evidence at protein level"/>
<protein>
    <recommendedName>
        <fullName>Genome polyprotein</fullName>
    </recommendedName>
    <component>
        <recommendedName>
            <fullName>Capsid protein C</fullName>
        </recommendedName>
        <alternativeName>
            <fullName>Core protein</fullName>
        </alternativeName>
    </component>
    <component>
        <recommendedName>
            <fullName>Protein prM</fullName>
        </recommendedName>
    </component>
    <component>
        <recommendedName>
            <fullName>Peptide pr</fullName>
        </recommendedName>
    </component>
    <component>
        <recommendedName>
            <fullName>Small envelope protein M</fullName>
        </recommendedName>
        <alternativeName>
            <fullName>Matrix protein</fullName>
        </alternativeName>
    </component>
    <component>
        <recommendedName>
            <fullName>Envelope protein E</fullName>
        </recommendedName>
    </component>
    <component>
        <recommendedName>
            <fullName>Non-structural protein 1</fullName>
            <shortName>NS1</shortName>
        </recommendedName>
    </component>
    <component>
        <recommendedName>
            <fullName>Non-structural protein 2A</fullName>
            <shortName>NS2A</shortName>
        </recommendedName>
    </component>
    <component>
        <recommendedName>
            <fullName>Serine protease subunit NS2B</fullName>
        </recommendedName>
        <alternativeName>
            <fullName>Flavivirin protease NS2B regulatory subunit</fullName>
        </alternativeName>
        <alternativeName>
            <fullName>Non-structural protein 2B</fullName>
        </alternativeName>
    </component>
    <component>
        <recommendedName>
            <fullName>Serine protease NS3</fullName>
            <ecNumber evidence="25">3.4.21.91</ecNumber>
            <ecNumber evidence="21">3.6.1.15</ecNumber>
            <ecNumber evidence="21">3.6.4.13</ecNumber>
        </recommendedName>
        <alternativeName>
            <fullName>Flavivirin protease NS3 catalytic subunit</fullName>
        </alternativeName>
        <alternativeName>
            <fullName>Non-structural protein 3</fullName>
        </alternativeName>
    </component>
    <component>
        <recommendedName>
            <fullName>Non-structural protein 4A</fullName>
            <shortName>NS4A</shortName>
        </recommendedName>
    </component>
    <component>
        <recommendedName>
            <fullName>Peptide 2k</fullName>
        </recommendedName>
    </component>
    <component>
        <recommendedName>
            <fullName>Non-structural protein 4B</fullName>
            <shortName>NS4B</shortName>
        </recommendedName>
    </component>
    <component>
        <recommendedName>
            <fullName>RNA-directed RNA polymerase NS5</fullName>
            <ecNumber evidence="17">2.1.1.56</ecNumber>
            <ecNumber evidence="17">2.1.1.57</ecNumber>
            <ecNumber evidence="12">2.7.7.48</ecNumber>
        </recommendedName>
        <alternativeName>
            <fullName>Non-structural protein 5</fullName>
        </alternativeName>
    </component>
</protein>
<accession>P27395</accession>
<accession>Q82920</accession>
<accession>Q82921</accession>
<accession>Q82922</accession>
<accession>Q82923</accession>
<accession>Q82924</accession>
<accession>Q82925</accession>
<accession>Q82926</accession>
<accession>Q82927</accession>
<accession>Q82928</accession>
<keyword id="KW-0002">3D-structure</keyword>
<keyword id="KW-0007">Acetylation</keyword>
<keyword id="KW-1072">Activation of host autophagy by virus</keyword>
<keyword id="KW-0067">ATP-binding</keyword>
<keyword id="KW-0167">Capsid protein</keyword>
<keyword id="KW-1165">Clathrin-mediated endocytosis of virus by host</keyword>
<keyword id="KW-0165">Cleavage on pair of basic residues</keyword>
<keyword id="KW-1015">Disulfide bond</keyword>
<keyword id="KW-1170">Fusion of virus membrane with host endosomal membrane</keyword>
<keyword id="KW-1168">Fusion of virus membrane with host membrane</keyword>
<keyword id="KW-0325">Glycoprotein</keyword>
<keyword id="KW-0347">Helicase</keyword>
<keyword id="KW-1035">Host cytoplasm</keyword>
<keyword id="KW-1038">Host endoplasmic reticulum</keyword>
<keyword id="KW-1043">Host membrane</keyword>
<keyword id="KW-1048">Host nucleus</keyword>
<keyword id="KW-0945">Host-virus interaction</keyword>
<keyword id="KW-0378">Hydrolase</keyword>
<keyword id="KW-1090">Inhibition of host innate immune response by virus</keyword>
<keyword id="KW-1114">Inhibition of host interferon signaling pathway by virus</keyword>
<keyword id="KW-1105">Inhibition of host STAT1 by virus</keyword>
<keyword id="KW-1106">Inhibition of host STAT2 by virus</keyword>
<keyword id="KW-1112">Inhibition of host TYK2 by virus</keyword>
<keyword id="KW-0922">Interferon antiviral system evasion</keyword>
<keyword id="KW-0472">Membrane</keyword>
<keyword id="KW-0479">Metal-binding</keyword>
<keyword id="KW-0489">Methyltransferase</keyword>
<keyword id="KW-0506">mRNA capping</keyword>
<keyword id="KW-0507">mRNA processing</keyword>
<keyword id="KW-0511">Multifunctional enzyme</keyword>
<keyword id="KW-0547">Nucleotide-binding</keyword>
<keyword id="KW-0548">Nucleotidyltransferase</keyword>
<keyword id="KW-0597">Phosphoprotein</keyword>
<keyword id="KW-0645">Protease</keyword>
<keyword id="KW-0688">Ribosomal frameshifting</keyword>
<keyword id="KW-0694">RNA-binding</keyword>
<keyword id="KW-0696">RNA-directed RNA polymerase</keyword>
<keyword id="KW-0949">S-adenosyl-L-methionine</keyword>
<keyword id="KW-0964">Secreted</keyword>
<keyword id="KW-0720">Serine protease</keyword>
<keyword id="KW-0941">Suppressor of RNA silencing</keyword>
<keyword id="KW-0804">Transcription</keyword>
<keyword id="KW-0805">Transcription regulation</keyword>
<keyword id="KW-0808">Transferase</keyword>
<keyword id="KW-0812">Transmembrane</keyword>
<keyword id="KW-1133">Transmembrane helix</keyword>
<keyword id="KW-1161">Viral attachment to host cell</keyword>
<keyword id="KW-0261">Viral envelope protein</keyword>
<keyword id="KW-0899">Viral immunoevasion</keyword>
<keyword id="KW-1162">Viral penetration into host cytoplasm</keyword>
<keyword id="KW-0693">Viral RNA replication</keyword>
<keyword id="KW-0946">Virion</keyword>
<keyword id="KW-1164">Virus endocytosis by host</keyword>
<keyword id="KW-1160">Virus entry into host cell</keyword>
<keyword id="KW-0862">Zinc</keyword>
<evidence type="ECO:0000250" key="1">
    <source>
        <dbReference type="UniProtKB" id="P03314"/>
    </source>
</evidence>
<evidence type="ECO:0000250" key="2">
    <source>
        <dbReference type="UniProtKB" id="P06935"/>
    </source>
</evidence>
<evidence type="ECO:0000250" key="3">
    <source>
        <dbReference type="UniProtKB" id="P14335"/>
    </source>
</evidence>
<evidence type="ECO:0000250" key="4">
    <source>
        <dbReference type="UniProtKB" id="P14336"/>
    </source>
</evidence>
<evidence type="ECO:0000250" key="5">
    <source>
        <dbReference type="UniProtKB" id="P14340"/>
    </source>
</evidence>
<evidence type="ECO:0000250" key="6">
    <source>
        <dbReference type="UniProtKB" id="P17763"/>
    </source>
</evidence>
<evidence type="ECO:0000250" key="7">
    <source>
        <dbReference type="UniProtKB" id="P29990"/>
    </source>
</evidence>
<evidence type="ECO:0000250" key="8">
    <source>
        <dbReference type="UniProtKB" id="Q32ZE1"/>
    </source>
</evidence>
<evidence type="ECO:0000250" key="9">
    <source>
        <dbReference type="UniProtKB" id="Q6YMS4"/>
    </source>
</evidence>
<evidence type="ECO:0000250" key="10">
    <source>
        <dbReference type="UniProtKB" id="Q9Q6P4"/>
    </source>
</evidence>
<evidence type="ECO:0000255" key="11"/>
<evidence type="ECO:0000255" key="12">
    <source>
        <dbReference type="PROSITE-ProRule" id="PRU00539"/>
    </source>
</evidence>
<evidence type="ECO:0000255" key="13">
    <source>
        <dbReference type="PROSITE-ProRule" id="PRU00541"/>
    </source>
</evidence>
<evidence type="ECO:0000255" key="14">
    <source>
        <dbReference type="PROSITE-ProRule" id="PRU00542"/>
    </source>
</evidence>
<evidence type="ECO:0000255" key="15">
    <source>
        <dbReference type="PROSITE-ProRule" id="PRU00859"/>
    </source>
</evidence>
<evidence type="ECO:0000255" key="16">
    <source>
        <dbReference type="PROSITE-ProRule" id="PRU00860"/>
    </source>
</evidence>
<evidence type="ECO:0000255" key="17">
    <source>
        <dbReference type="PROSITE-ProRule" id="PRU00924"/>
    </source>
</evidence>
<evidence type="ECO:0000256" key="18">
    <source>
        <dbReference type="SAM" id="MobiDB-lite"/>
    </source>
</evidence>
<evidence type="ECO:0000269" key="19">
    <source>
    </source>
</evidence>
<evidence type="ECO:0000269" key="20">
    <source>
    </source>
</evidence>
<evidence type="ECO:0000269" key="21">
    <source>
    </source>
</evidence>
<evidence type="ECO:0000269" key="22">
    <source>
    </source>
</evidence>
<evidence type="ECO:0000269" key="23">
    <source>
    </source>
</evidence>
<evidence type="ECO:0000269" key="24">
    <source>
    </source>
</evidence>
<evidence type="ECO:0000269" key="25">
    <source>
    </source>
</evidence>
<evidence type="ECO:0000305" key="26"/>
<evidence type="ECO:0000305" key="27">
    <source>
    </source>
</evidence>
<evidence type="ECO:0007744" key="28">
    <source>
        <dbReference type="PDB" id="2Z83"/>
    </source>
</evidence>
<evidence type="ECO:0007744" key="29">
    <source>
        <dbReference type="PDB" id="3P54"/>
    </source>
</evidence>
<evidence type="ECO:0007744" key="30">
    <source>
        <dbReference type="PDB" id="4HDG"/>
    </source>
</evidence>
<evidence type="ECO:0007744" key="31">
    <source>
        <dbReference type="PDB" id="4HDH"/>
    </source>
</evidence>
<evidence type="ECO:0007744" key="32">
    <source>
        <dbReference type="PDB" id="4K6M"/>
    </source>
</evidence>
<evidence type="ECO:0007744" key="33">
    <source>
        <dbReference type="PDB" id="4MTP"/>
    </source>
</evidence>
<evidence type="ECO:0007829" key="34">
    <source>
        <dbReference type="PDB" id="2Z83"/>
    </source>
</evidence>
<evidence type="ECO:0007829" key="35">
    <source>
        <dbReference type="PDB" id="3P54"/>
    </source>
</evidence>
<evidence type="ECO:0007829" key="36">
    <source>
        <dbReference type="PDB" id="4HDH"/>
    </source>
</evidence>
<evidence type="ECO:0007829" key="37">
    <source>
        <dbReference type="PDB" id="4K6M"/>
    </source>
</evidence>
<evidence type="ECO:0007829" key="38">
    <source>
        <dbReference type="PDB" id="5O19"/>
    </source>
</evidence>
<evidence type="ECO:0007829" key="39">
    <source>
        <dbReference type="PDB" id="5OW2"/>
    </source>
</evidence>
<organism>
    <name type="scientific">Japanese encephalitis virus (strain SA-14)</name>
    <name type="common">JEV</name>
    <dbReference type="NCBI Taxonomy" id="11073"/>
    <lineage>
        <taxon>Viruses</taxon>
        <taxon>Riboviria</taxon>
        <taxon>Orthornavirae</taxon>
        <taxon>Kitrinoviricota</taxon>
        <taxon>Flasuviricetes</taxon>
        <taxon>Amarillovirales</taxon>
        <taxon>Flaviviridae</taxon>
        <taxon>Orthoflavivirus</taxon>
        <taxon>Orthoflavivirus japonicum</taxon>
    </lineage>
</organism>
<dbReference type="EC" id="3.4.21.91" evidence="25"/>
<dbReference type="EC" id="3.6.1.15" evidence="21"/>
<dbReference type="EC" id="3.6.4.13" evidence="21"/>
<dbReference type="EC" id="2.1.1.56" evidence="17"/>
<dbReference type="EC" id="2.1.1.57" evidence="17"/>
<dbReference type="EC" id="2.7.7.48" evidence="12"/>
<dbReference type="EMBL" id="M55506">
    <property type="protein sequence ID" value="AAA46248.1"/>
    <property type="molecule type" value="Genomic_RNA"/>
</dbReference>
<dbReference type="EMBL" id="M55506">
    <property type="protein sequence ID" value="AAA46249.1"/>
    <property type="status" value="ALT_INIT"/>
    <property type="molecule type" value="Genomic_RNA"/>
</dbReference>
<dbReference type="PIR" id="A35519">
    <property type="entry name" value="GNWVJS"/>
</dbReference>
<dbReference type="PDB" id="2Z83">
    <property type="method" value="X-ray"/>
    <property type="resolution" value="1.80 A"/>
    <property type="chains" value="A=1685-2123"/>
</dbReference>
<dbReference type="PDB" id="3P54">
    <property type="method" value="X-ray"/>
    <property type="resolution" value="2.10 A"/>
    <property type="chains" value="A=295-700"/>
</dbReference>
<dbReference type="PDB" id="4HDG">
    <property type="method" value="X-ray"/>
    <property type="resolution" value="2.38 A"/>
    <property type="chains" value="A/B=2799-3432"/>
</dbReference>
<dbReference type="PDB" id="4HDH">
    <property type="method" value="X-ray"/>
    <property type="resolution" value="2.28 A"/>
    <property type="chains" value="A/B=2799-3432"/>
</dbReference>
<dbReference type="PDB" id="4K6M">
    <property type="method" value="X-ray"/>
    <property type="resolution" value="2.60 A"/>
    <property type="chains" value="A/B=2528-3432"/>
</dbReference>
<dbReference type="PDB" id="4MTP">
    <property type="method" value="X-ray"/>
    <property type="resolution" value="3.65 A"/>
    <property type="chains" value="A/B/C/D=2799-3432"/>
</dbReference>
<dbReference type="PDB" id="5MV1">
    <property type="method" value="X-ray"/>
    <property type="resolution" value="2.25 A"/>
    <property type="chains" value="A=295-700"/>
</dbReference>
<dbReference type="PDB" id="5MV2">
    <property type="method" value="X-ray"/>
    <property type="resolution" value="2.10 A"/>
    <property type="chains" value="A=295-700"/>
</dbReference>
<dbReference type="PDB" id="5O19">
    <property type="method" value="X-ray"/>
    <property type="resolution" value="2.10 A"/>
    <property type="chains" value="A=965-1146"/>
</dbReference>
<dbReference type="PDB" id="5O36">
    <property type="method" value="X-ray"/>
    <property type="resolution" value="2.60 A"/>
    <property type="chains" value="A=965-1158"/>
</dbReference>
<dbReference type="PDB" id="5OW2">
    <property type="method" value="X-ray"/>
    <property type="resolution" value="1.98 A"/>
    <property type="chains" value="A/B=1-105"/>
</dbReference>
<dbReference type="PDB" id="5WSN">
    <property type="method" value="EM"/>
    <property type="resolution" value="4.30 A"/>
    <property type="chains" value="B/D/F=220-293"/>
</dbReference>
<dbReference type="PDB" id="5YWO">
    <property type="method" value="EM"/>
    <property type="resolution" value="4.70 A"/>
    <property type="chains" value="B/D/F=220-293"/>
</dbReference>
<dbReference type="PDB" id="5YWP">
    <property type="method" value="EM"/>
    <property type="resolution" value="4.60 A"/>
    <property type="chains" value="B/D/F=220-293"/>
</dbReference>
<dbReference type="PDBsum" id="2Z83"/>
<dbReference type="PDBsum" id="3P54"/>
<dbReference type="PDBsum" id="4HDG"/>
<dbReference type="PDBsum" id="4HDH"/>
<dbReference type="PDBsum" id="4K6M"/>
<dbReference type="PDBsum" id="4MTP"/>
<dbReference type="PDBsum" id="5MV1"/>
<dbReference type="PDBsum" id="5MV2"/>
<dbReference type="PDBsum" id="5O19"/>
<dbReference type="PDBsum" id="5O36"/>
<dbReference type="PDBsum" id="5OW2"/>
<dbReference type="PDBsum" id="5WSN"/>
<dbReference type="PDBsum" id="5YWO"/>
<dbReference type="PDBsum" id="5YWP"/>
<dbReference type="EMDB" id="EMD-6854"/>
<dbReference type="EMDB" id="EMD-6855"/>
<dbReference type="SMR" id="P27395"/>
<dbReference type="MEROPS" id="S07.003"/>
<dbReference type="BRENDA" id="3.4.21.91">
    <property type="organism ID" value="2787"/>
</dbReference>
<dbReference type="BRENDA" id="3.6.4.12">
    <property type="organism ID" value="2787"/>
</dbReference>
<dbReference type="BRENDA" id="3.6.4.13">
    <property type="organism ID" value="2787"/>
</dbReference>
<dbReference type="EvolutionaryTrace" id="P27395"/>
<dbReference type="Proteomes" id="UP000008380">
    <property type="component" value="Genome"/>
</dbReference>
<dbReference type="GO" id="GO:0005576">
    <property type="term" value="C:extracellular region"/>
    <property type="evidence" value="ECO:0007669"/>
    <property type="project" value="UniProtKB-SubCell"/>
</dbReference>
<dbReference type="GO" id="GO:0044167">
    <property type="term" value="C:host cell endoplasmic reticulum membrane"/>
    <property type="evidence" value="ECO:0007669"/>
    <property type="project" value="UniProtKB-SubCell"/>
</dbReference>
<dbReference type="GO" id="GO:0042025">
    <property type="term" value="C:host cell nucleus"/>
    <property type="evidence" value="ECO:0007669"/>
    <property type="project" value="UniProtKB-SubCell"/>
</dbReference>
<dbReference type="GO" id="GO:0044220">
    <property type="term" value="C:host cell perinuclear region of cytoplasm"/>
    <property type="evidence" value="ECO:0007669"/>
    <property type="project" value="UniProtKB-SubCell"/>
</dbReference>
<dbReference type="GO" id="GO:0044228">
    <property type="term" value="C:host cell surface"/>
    <property type="evidence" value="ECO:0007669"/>
    <property type="project" value="UniProtKB-SubCell"/>
</dbReference>
<dbReference type="GO" id="GO:0016020">
    <property type="term" value="C:membrane"/>
    <property type="evidence" value="ECO:0007669"/>
    <property type="project" value="UniProtKB-KW"/>
</dbReference>
<dbReference type="GO" id="GO:0019028">
    <property type="term" value="C:viral capsid"/>
    <property type="evidence" value="ECO:0007669"/>
    <property type="project" value="UniProtKB-KW"/>
</dbReference>
<dbReference type="GO" id="GO:0019031">
    <property type="term" value="C:viral envelope"/>
    <property type="evidence" value="ECO:0007669"/>
    <property type="project" value="UniProtKB-KW"/>
</dbReference>
<dbReference type="GO" id="GO:0055036">
    <property type="term" value="C:virion membrane"/>
    <property type="evidence" value="ECO:0007669"/>
    <property type="project" value="UniProtKB-SubCell"/>
</dbReference>
<dbReference type="GO" id="GO:0005524">
    <property type="term" value="F:ATP binding"/>
    <property type="evidence" value="ECO:0007669"/>
    <property type="project" value="UniProtKB-KW"/>
</dbReference>
<dbReference type="GO" id="GO:0016887">
    <property type="term" value="F:ATP hydrolysis activity"/>
    <property type="evidence" value="ECO:0007669"/>
    <property type="project" value="RHEA"/>
</dbReference>
<dbReference type="GO" id="GO:0003725">
    <property type="term" value="F:double-stranded RNA binding"/>
    <property type="evidence" value="ECO:0007669"/>
    <property type="project" value="InterPro"/>
</dbReference>
<dbReference type="GO" id="GO:0046872">
    <property type="term" value="F:metal ion binding"/>
    <property type="evidence" value="ECO:0007669"/>
    <property type="project" value="UniProtKB-KW"/>
</dbReference>
<dbReference type="GO" id="GO:0004483">
    <property type="term" value="F:mRNA (nucleoside-2'-O-)-methyltransferase activity"/>
    <property type="evidence" value="ECO:0007669"/>
    <property type="project" value="UniProtKB-EC"/>
</dbReference>
<dbReference type="GO" id="GO:0004482">
    <property type="term" value="F:mRNA 5'-cap (guanine-N7-)-methyltransferase activity"/>
    <property type="evidence" value="ECO:0007669"/>
    <property type="project" value="UniProtKB-EC"/>
</dbReference>
<dbReference type="GO" id="GO:0046983">
    <property type="term" value="F:protein dimerization activity"/>
    <property type="evidence" value="ECO:0007669"/>
    <property type="project" value="InterPro"/>
</dbReference>
<dbReference type="GO" id="GO:0003724">
    <property type="term" value="F:RNA helicase activity"/>
    <property type="evidence" value="ECO:0007669"/>
    <property type="project" value="UniProtKB-EC"/>
</dbReference>
<dbReference type="GO" id="GO:0003968">
    <property type="term" value="F:RNA-directed RNA polymerase activity"/>
    <property type="evidence" value="ECO:0007669"/>
    <property type="project" value="UniProtKB-KW"/>
</dbReference>
<dbReference type="GO" id="GO:0004252">
    <property type="term" value="F:serine-type endopeptidase activity"/>
    <property type="evidence" value="ECO:0007669"/>
    <property type="project" value="InterPro"/>
</dbReference>
<dbReference type="GO" id="GO:0005198">
    <property type="term" value="F:structural molecule activity"/>
    <property type="evidence" value="ECO:0007669"/>
    <property type="project" value="InterPro"/>
</dbReference>
<dbReference type="GO" id="GO:0075512">
    <property type="term" value="P:clathrin-dependent endocytosis of virus by host cell"/>
    <property type="evidence" value="ECO:0007669"/>
    <property type="project" value="UniProtKB-KW"/>
</dbReference>
<dbReference type="GO" id="GO:0039654">
    <property type="term" value="P:fusion of virus membrane with host endosome membrane"/>
    <property type="evidence" value="ECO:0007669"/>
    <property type="project" value="UniProtKB-KW"/>
</dbReference>
<dbReference type="GO" id="GO:0006508">
    <property type="term" value="P:proteolysis"/>
    <property type="evidence" value="ECO:0007669"/>
    <property type="project" value="UniProtKB-KW"/>
</dbReference>
<dbReference type="GO" id="GO:0039520">
    <property type="term" value="P:symbiont-mediated activation of host autophagy"/>
    <property type="evidence" value="ECO:0007669"/>
    <property type="project" value="UniProtKB-KW"/>
</dbReference>
<dbReference type="GO" id="GO:0039574">
    <property type="term" value="P:symbiont-mediated suppression of host JAK-STAT cascade via inhibition of host TYK2 activity"/>
    <property type="evidence" value="ECO:0007669"/>
    <property type="project" value="UniProtKB-KW"/>
</dbReference>
<dbReference type="GO" id="GO:0039563">
    <property type="term" value="P:symbiont-mediated suppression of host JAK-STAT cascade via inhibition of STAT1 activity"/>
    <property type="evidence" value="ECO:0007669"/>
    <property type="project" value="UniProtKB-KW"/>
</dbReference>
<dbReference type="GO" id="GO:0039564">
    <property type="term" value="P:symbiont-mediated suppression of host JAK-STAT cascade via inhibition of STAT2 activity"/>
    <property type="evidence" value="ECO:0007669"/>
    <property type="project" value="UniProtKB-KW"/>
</dbReference>
<dbReference type="GO" id="GO:0039502">
    <property type="term" value="P:symbiont-mediated suppression of host type I interferon-mediated signaling pathway"/>
    <property type="evidence" value="ECO:0007669"/>
    <property type="project" value="UniProtKB-KW"/>
</dbReference>
<dbReference type="GO" id="GO:0039694">
    <property type="term" value="P:viral RNA genome replication"/>
    <property type="evidence" value="ECO:0007669"/>
    <property type="project" value="InterPro"/>
</dbReference>
<dbReference type="GO" id="GO:0075523">
    <property type="term" value="P:viral translational frameshifting"/>
    <property type="evidence" value="ECO:0007669"/>
    <property type="project" value="UniProtKB-KW"/>
</dbReference>
<dbReference type="GO" id="GO:0019062">
    <property type="term" value="P:virion attachment to host cell"/>
    <property type="evidence" value="ECO:0007669"/>
    <property type="project" value="UniProtKB-KW"/>
</dbReference>
<dbReference type="CDD" id="cd20761">
    <property type="entry name" value="capping_2-OMTase_Flaviviridae"/>
    <property type="match status" value="1"/>
</dbReference>
<dbReference type="CDD" id="cd17931">
    <property type="entry name" value="DEXHc_viral_Ns3"/>
    <property type="match status" value="1"/>
</dbReference>
<dbReference type="CDD" id="cd12149">
    <property type="entry name" value="Flavi_E_C"/>
    <property type="match status" value="1"/>
</dbReference>
<dbReference type="CDD" id="cd17038">
    <property type="entry name" value="Flavi_M"/>
    <property type="match status" value="1"/>
</dbReference>
<dbReference type="CDD" id="cd23204">
    <property type="entry name" value="Flavivirus_RdRp"/>
    <property type="match status" value="1"/>
</dbReference>
<dbReference type="CDD" id="cd18806">
    <property type="entry name" value="SF2_C_viral"/>
    <property type="match status" value="1"/>
</dbReference>
<dbReference type="FunFam" id="1.20.1280.260:FF:000001">
    <property type="entry name" value="Envelope glycoprotein"/>
    <property type="match status" value="1"/>
</dbReference>
<dbReference type="FunFam" id="2.60.40.350:FF:000001">
    <property type="entry name" value="Envelope glycoprotein"/>
    <property type="match status" value="1"/>
</dbReference>
<dbReference type="FunFam" id="1.10.260.90:FF:000001">
    <property type="entry name" value="Genome polyprotein"/>
    <property type="match status" value="1"/>
</dbReference>
<dbReference type="FunFam" id="2.60.260.50:FF:000001">
    <property type="entry name" value="Genome polyprotein"/>
    <property type="match status" value="1"/>
</dbReference>
<dbReference type="FunFam" id="3.30.70.2840:FF:000001">
    <property type="entry name" value="Genome polyprotein"/>
    <property type="match status" value="1"/>
</dbReference>
<dbReference type="FunFam" id="3.40.50.150:FF:000105">
    <property type="entry name" value="Genome polyprotein"/>
    <property type="match status" value="1"/>
</dbReference>
<dbReference type="FunFam" id="3.40.50.300:FF:000763">
    <property type="entry name" value="Genome polyprotein"/>
    <property type="match status" value="1"/>
</dbReference>
<dbReference type="Gene3D" id="1.10.10.930">
    <property type="match status" value="1"/>
</dbReference>
<dbReference type="Gene3D" id="1.10.260.90">
    <property type="match status" value="1"/>
</dbReference>
<dbReference type="Gene3D" id="1.20.1280.260">
    <property type="match status" value="1"/>
</dbReference>
<dbReference type="Gene3D" id="2.40.10.120">
    <property type="match status" value="2"/>
</dbReference>
<dbReference type="Gene3D" id="2.60.40.350">
    <property type="match status" value="1"/>
</dbReference>
<dbReference type="Gene3D" id="1.10.8.970">
    <property type="entry name" value="Flavivirus envelope glycoprotein M-like"/>
    <property type="match status" value="1"/>
</dbReference>
<dbReference type="Gene3D" id="2.60.260.50">
    <property type="entry name" value="Flavivirus polyprotein propeptide domain"/>
    <property type="match status" value="1"/>
</dbReference>
<dbReference type="Gene3D" id="3.30.70.2840">
    <property type="entry name" value="Flavivirus RNA-directed RNA polymerase, thumb domain"/>
    <property type="match status" value="3"/>
</dbReference>
<dbReference type="Gene3D" id="3.40.50.300">
    <property type="entry name" value="P-loop containing nucleotide triphosphate hydrolases"/>
    <property type="match status" value="2"/>
</dbReference>
<dbReference type="Gene3D" id="2.60.98.10">
    <property type="entry name" value="Tick-borne Encephalitis virus Glycoprotein, domain 1"/>
    <property type="match status" value="1"/>
</dbReference>
<dbReference type="Gene3D" id="3.40.50.150">
    <property type="entry name" value="Vaccinia Virus protein VP39"/>
    <property type="match status" value="1"/>
</dbReference>
<dbReference type="Gene3D" id="3.30.67.10">
    <property type="entry name" value="Viral Envelope Glycoprotein, domain 2"/>
    <property type="match status" value="1"/>
</dbReference>
<dbReference type="Gene3D" id="3.30.387.10">
    <property type="entry name" value="Viral Envelope Glycoprotein, domain 3"/>
    <property type="match status" value="1"/>
</dbReference>
<dbReference type="InterPro" id="IPR043502">
    <property type="entry name" value="DNA/RNA_pol_sf"/>
</dbReference>
<dbReference type="InterPro" id="IPR000069">
    <property type="entry name" value="Env_glycoprot_M_flavivir"/>
</dbReference>
<dbReference type="InterPro" id="IPR038302">
    <property type="entry name" value="Env_glycoprot_M_sf_flavivir"/>
</dbReference>
<dbReference type="InterPro" id="IPR013755">
    <property type="entry name" value="Flav_gly_cen_dom_subdom1"/>
</dbReference>
<dbReference type="InterPro" id="IPR001122">
    <property type="entry name" value="Flavi_capsidC"/>
</dbReference>
<dbReference type="InterPro" id="IPR037172">
    <property type="entry name" value="Flavi_capsidC_sf"/>
</dbReference>
<dbReference type="InterPro" id="IPR011492">
    <property type="entry name" value="Flavi_DEAD"/>
</dbReference>
<dbReference type="InterPro" id="IPR027287">
    <property type="entry name" value="Flavi_E_Ig-like"/>
</dbReference>
<dbReference type="InterPro" id="IPR026470">
    <property type="entry name" value="Flavi_E_Stem/Anchor_dom"/>
</dbReference>
<dbReference type="InterPro" id="IPR038345">
    <property type="entry name" value="Flavi_E_Stem/Anchor_dom_sf"/>
</dbReference>
<dbReference type="InterPro" id="IPR011998">
    <property type="entry name" value="Flavi_Glycoprot_E_cen/dimer"/>
</dbReference>
<dbReference type="InterPro" id="IPR001157">
    <property type="entry name" value="Flavi_NS1"/>
</dbReference>
<dbReference type="InterPro" id="IPR000752">
    <property type="entry name" value="Flavi_NS2A"/>
</dbReference>
<dbReference type="InterPro" id="IPR000487">
    <property type="entry name" value="Flavi_NS2B"/>
</dbReference>
<dbReference type="InterPro" id="IPR001850">
    <property type="entry name" value="Flavi_NS3_S7"/>
</dbReference>
<dbReference type="InterPro" id="IPR000404">
    <property type="entry name" value="Flavi_NS4A"/>
</dbReference>
<dbReference type="InterPro" id="IPR001528">
    <property type="entry name" value="Flavi_NS4B"/>
</dbReference>
<dbReference type="InterPro" id="IPR046811">
    <property type="entry name" value="Flavi_NS5_thumb"/>
</dbReference>
<dbReference type="InterPro" id="IPR002535">
    <property type="entry name" value="Flavi_propep"/>
</dbReference>
<dbReference type="InterPro" id="IPR038688">
    <property type="entry name" value="Flavi_propep_sf"/>
</dbReference>
<dbReference type="InterPro" id="IPR047530">
    <property type="entry name" value="Flavi_RdRp"/>
</dbReference>
<dbReference type="InterPro" id="IPR000208">
    <property type="entry name" value="Flavi_RdRp_fingers/palm"/>
</dbReference>
<dbReference type="InterPro" id="IPR000336">
    <property type="entry name" value="Flavivir/Alphavir_Ig-like_sf"/>
</dbReference>
<dbReference type="InterPro" id="IPR014412">
    <property type="entry name" value="Gen_Poly_FLV"/>
</dbReference>
<dbReference type="InterPro" id="IPR036253">
    <property type="entry name" value="Glycoprot_cen/dimer_sf"/>
</dbReference>
<dbReference type="InterPro" id="IPR038055">
    <property type="entry name" value="Glycoprot_E_dimer_dom"/>
</dbReference>
<dbReference type="InterPro" id="IPR013756">
    <property type="entry name" value="GlyE_cen_dom_subdom2"/>
</dbReference>
<dbReference type="InterPro" id="IPR014001">
    <property type="entry name" value="Helicase_ATP-bd"/>
</dbReference>
<dbReference type="InterPro" id="IPR001650">
    <property type="entry name" value="Helicase_C-like"/>
</dbReference>
<dbReference type="InterPro" id="IPR014756">
    <property type="entry name" value="Ig_E-set"/>
</dbReference>
<dbReference type="InterPro" id="IPR026490">
    <property type="entry name" value="mRNA_cap_0/1_MeTrfase"/>
</dbReference>
<dbReference type="InterPro" id="IPR049486">
    <property type="entry name" value="NS3-hel_C_flaviviridae"/>
</dbReference>
<dbReference type="InterPro" id="IPR027417">
    <property type="entry name" value="P-loop_NTPase"/>
</dbReference>
<dbReference type="InterPro" id="IPR009003">
    <property type="entry name" value="Peptidase_S1_PA"/>
</dbReference>
<dbReference type="InterPro" id="IPR007094">
    <property type="entry name" value="RNA-dir_pol_PSvirus"/>
</dbReference>
<dbReference type="InterPro" id="IPR002877">
    <property type="entry name" value="RNA_MeTrfase_FtsJ_dom"/>
</dbReference>
<dbReference type="InterPro" id="IPR029063">
    <property type="entry name" value="SAM-dependent_MTases_sf"/>
</dbReference>
<dbReference type="NCBIfam" id="TIGR04240">
    <property type="entry name" value="flavi_E_stem"/>
    <property type="match status" value="1"/>
</dbReference>
<dbReference type="Pfam" id="PF20907">
    <property type="entry name" value="Flav_NS3-hel_C"/>
    <property type="match status" value="1"/>
</dbReference>
<dbReference type="Pfam" id="PF01003">
    <property type="entry name" value="Flavi_capsid"/>
    <property type="match status" value="1"/>
</dbReference>
<dbReference type="Pfam" id="PF07652">
    <property type="entry name" value="Flavi_DEAD"/>
    <property type="match status" value="1"/>
</dbReference>
<dbReference type="Pfam" id="PF21659">
    <property type="entry name" value="Flavi_E_stem"/>
    <property type="match status" value="1"/>
</dbReference>
<dbReference type="Pfam" id="PF02832">
    <property type="entry name" value="Flavi_glycop_C"/>
    <property type="match status" value="1"/>
</dbReference>
<dbReference type="Pfam" id="PF00869">
    <property type="entry name" value="Flavi_glycoprot"/>
    <property type="match status" value="1"/>
</dbReference>
<dbReference type="Pfam" id="PF01004">
    <property type="entry name" value="Flavi_M"/>
    <property type="match status" value="1"/>
</dbReference>
<dbReference type="Pfam" id="PF00948">
    <property type="entry name" value="Flavi_NS1"/>
    <property type="match status" value="1"/>
</dbReference>
<dbReference type="Pfam" id="PF01005">
    <property type="entry name" value="Flavi_NS2A"/>
    <property type="match status" value="1"/>
</dbReference>
<dbReference type="Pfam" id="PF01002">
    <property type="entry name" value="Flavi_NS2B"/>
    <property type="match status" value="1"/>
</dbReference>
<dbReference type="Pfam" id="PF01350">
    <property type="entry name" value="Flavi_NS4A"/>
    <property type="match status" value="1"/>
</dbReference>
<dbReference type="Pfam" id="PF01349">
    <property type="entry name" value="Flavi_NS4B"/>
    <property type="match status" value="1"/>
</dbReference>
<dbReference type="Pfam" id="PF00972">
    <property type="entry name" value="Flavi_NS5"/>
    <property type="match status" value="1"/>
</dbReference>
<dbReference type="Pfam" id="PF20483">
    <property type="entry name" value="Flavi_NS5_thumb"/>
    <property type="match status" value="1"/>
</dbReference>
<dbReference type="Pfam" id="PF01570">
    <property type="entry name" value="Flavi_propep"/>
    <property type="match status" value="1"/>
</dbReference>
<dbReference type="Pfam" id="PF01728">
    <property type="entry name" value="FtsJ"/>
    <property type="match status" value="1"/>
</dbReference>
<dbReference type="Pfam" id="PF00949">
    <property type="entry name" value="Peptidase_S7"/>
    <property type="match status" value="1"/>
</dbReference>
<dbReference type="PIRSF" id="PIRSF003817">
    <property type="entry name" value="Gen_Poly_FLV"/>
    <property type="match status" value="1"/>
</dbReference>
<dbReference type="SMART" id="SM00487">
    <property type="entry name" value="DEXDc"/>
    <property type="match status" value="1"/>
</dbReference>
<dbReference type="SMART" id="SM00490">
    <property type="entry name" value="HELICc"/>
    <property type="match status" value="1"/>
</dbReference>
<dbReference type="SUPFAM" id="SSF56672">
    <property type="entry name" value="DNA/RNA polymerases"/>
    <property type="match status" value="1"/>
</dbReference>
<dbReference type="SUPFAM" id="SSF81296">
    <property type="entry name" value="E set domains"/>
    <property type="match status" value="1"/>
</dbReference>
<dbReference type="SUPFAM" id="SSF101257">
    <property type="entry name" value="Flavivirus capsid protein C"/>
    <property type="match status" value="1"/>
</dbReference>
<dbReference type="SUPFAM" id="SSF52540">
    <property type="entry name" value="P-loop containing nucleoside triphosphate hydrolases"/>
    <property type="match status" value="2"/>
</dbReference>
<dbReference type="SUPFAM" id="SSF53335">
    <property type="entry name" value="S-adenosyl-L-methionine-dependent methyltransferases"/>
    <property type="match status" value="1"/>
</dbReference>
<dbReference type="SUPFAM" id="SSF50494">
    <property type="entry name" value="Trypsin-like serine proteases"/>
    <property type="match status" value="1"/>
</dbReference>
<dbReference type="SUPFAM" id="SSF56983">
    <property type="entry name" value="Viral glycoprotein, central and dimerisation domains"/>
    <property type="match status" value="1"/>
</dbReference>
<dbReference type="PROSITE" id="PS51527">
    <property type="entry name" value="FLAVIVIRUS_NS2B"/>
    <property type="match status" value="1"/>
</dbReference>
<dbReference type="PROSITE" id="PS51528">
    <property type="entry name" value="FLAVIVIRUS_NS3PRO"/>
    <property type="match status" value="1"/>
</dbReference>
<dbReference type="PROSITE" id="PS51192">
    <property type="entry name" value="HELICASE_ATP_BIND_1"/>
    <property type="match status" value="1"/>
</dbReference>
<dbReference type="PROSITE" id="PS51194">
    <property type="entry name" value="HELICASE_CTER"/>
    <property type="match status" value="1"/>
</dbReference>
<dbReference type="PROSITE" id="PS50507">
    <property type="entry name" value="RDRP_SSRNA_POS"/>
    <property type="match status" value="1"/>
</dbReference>
<dbReference type="PROSITE" id="PS51591">
    <property type="entry name" value="RNA_CAP01_NS5_MT"/>
    <property type="match status" value="1"/>
</dbReference>
<comment type="function">
    <molecule>Capsid protein C</molecule>
    <text evidence="6">Plays a role in virus budding by binding to the cell membrane and gathering the viral RNA into a nucleocapsid that forms the core of a mature virus particle. During virus entry, may induce genome penetration into the host cytoplasm after hemifusion induced by the surface proteins. Can migrate to the cell nucleus where it modulates host functions. Overcomes the anti-viral effects of host EXOC1 by sequestering and degrading the latter through the proteasome degradation pathway.</text>
</comment>
<comment type="function">
    <molecule>Capsid protein C</molecule>
    <text evidence="1">Inhibits RNA silencing by interfering with host Dicer.</text>
</comment>
<comment type="function">
    <molecule>Peptide pr</molecule>
    <text evidence="6">Prevents premature fusion activity of envelope proteins in trans-Golgi by binding to envelope protein E at pH 6.0. After virion release in extracellular space, gets dissociated from E dimers.</text>
</comment>
<comment type="function">
    <molecule>Protein prM</molecule>
    <text evidence="6">Acts as a chaperone for envelope protein E during intracellular virion assembly by masking and inactivating envelope protein E fusion peptide. prM is the only viral peptide matured by host furin in the trans-Golgi network probably to avoid catastrophic activation of the viral fusion activity in acidic Golgi compartment prior to virion release. prM-E cleavage is inefficient, and many virions are only partially matured. These uncleaved prM would play a role in immune evasion.</text>
</comment>
<comment type="function">
    <molecule>Small envelope protein M</molecule>
    <text evidence="6">May play a role in virus budding. Exerts cytotoxic effects by activating a mitochondrial apoptotic pathway through M ectodomain. May display a viroporin activity.</text>
</comment>
<comment type="function">
    <molecule>Envelope protein E</molecule>
    <text evidence="6">Binds to host cell surface receptor and mediates fusion between viral and cellular membranes. Efficient virus attachment to cell is, at least in part, mediated by host HSPA5 (PubMed:28053106). Envelope protein is synthesized in the endoplasmic reticulum in the form of heterodimer with protein prM. They play a role in virion budding in the ER, and the newly formed immature particle is covered with 60 spikes composed of heterodimer between precursor prM and envelope protein E. The virion is transported to the Golgi apparatus where the low pH causes dissociation of PrM-E heterodimers and formation of E homodimers. prM-E cleavage is inefficient, and many virions are only partially matured. These uncleaved prM would play a role in immune evasion.</text>
</comment>
<comment type="function">
    <molecule>Non-structural protein 1</molecule>
    <text evidence="10">Involved in immune evasion, pathogenesis and viral replication. Once cleaved off the polyprotein, is targeted to three destinations: the viral replication cycle, the plasma membrane and the extracellular compartment. Essential for viral replication. Required for formation of the replication complex and recruitment of other non-structural proteins to the ER-derived membrane structures. Excreted as a hexameric lipoparticle that plays a role against host immune response. Antagonizing the complement function. Binds to the host macrophages and dendritic cells. Inhibits signal transduction originating from Toll-like receptor 3 (TLR3).</text>
</comment>
<comment type="function">
    <molecule>Non-structural protein 2A</molecule>
    <text evidence="3">Component of the viral RNA replication complex that functions in virion assembly and antagonizes the host alpha/beta interferon antiviral response.</text>
</comment>
<comment type="function">
    <molecule>Serine protease subunit NS2B</molecule>
    <text evidence="6 25">Required cofactor for the serine protease function of NS3 (PubMed:7897348). May have membrane-destabilizing activity and form viroporins (By similarity).</text>
</comment>
<comment type="function">
    <molecule>Serine protease NS3</molecule>
    <text evidence="16 21 25 27">Displays three enzymatic activities: serine protease, NTPase and RNA helicase (PubMed:18201743, PubMed:7897348). NS3 serine protease, in association with NS2B, performs its autocleavage and cleaves the polyprotein at dibasic sites in the cytoplasm: C-prM, NS2A-NS2B, NS2B-NS3, NS3-NS4A, NS4A-2K and NS4B-NS5 (Probable). NS3 RNA helicase binds RNA and unwinds dsRNA in the 3' to 5' direction (By similarity).</text>
</comment>
<comment type="function">
    <molecule>Non-structural protein 4A</molecule>
    <text evidence="10">Regulates the ATPase activity of the NS3 helicase activity (By similarity). NS4A allows NS3 helicase to conserve energy during unwinding (By similarity).</text>
</comment>
<comment type="function">
    <molecule>Peptide 2k</molecule>
    <text evidence="6">Functions as a signal peptide for NS4B and is required for the interferon antagonism activity of the latter.</text>
</comment>
<comment type="function">
    <molecule>Non-structural protein 4B</molecule>
    <text evidence="10">Induces the formation of ER-derived membrane vesicles where the viral replication takes place (By similarity). Inhibits interferon (IFN)-induced host STAT1 phosphorylation and nuclear translocation, thereby preventing the establishment of cellular antiviral state by blocking the IFN-alpha/beta pathway (By similarity). Inhibits STAT2 translocation in the nucleus after IFN-alpha treatment (By similarity).</text>
</comment>
<comment type="function">
    <molecule>RNA-directed RNA polymerase NS5</molecule>
    <text evidence="10 20 22">Replicates the viral (+) and (-) RNA genome (PubMed:24293643). Performs the capping of genomes in the cytoplasm. NS5 methylates viral RNA cap at guanine N-7 and ribose 2'-O positions (By similarity). Besides its role in RNA genome replication, also prevents the establishment of cellular antiviral state by blocking the interferon-alpha/beta (IFN-alpha/beta) signaling pathway (PubMed:16731929). Inhibits host TYK2 and STAT2 phosphorylation, thereby preventing activation of JAK-STAT signaling pathway (PubMed:16731929).</text>
</comment>
<comment type="catalytic activity">
    <reaction evidence="25">
        <text>Selective hydrolysis of -Xaa-Xaa-|-Yaa- bonds in which each of the Xaa can be either Arg or Lys and Yaa can be either Ser or Ala.</text>
        <dbReference type="EC" id="3.4.21.91"/>
    </reaction>
</comment>
<comment type="catalytic activity">
    <reaction evidence="12">
        <text>RNA(n) + a ribonucleoside 5'-triphosphate = RNA(n+1) + diphosphate</text>
        <dbReference type="Rhea" id="RHEA:21248"/>
        <dbReference type="Rhea" id="RHEA-COMP:14527"/>
        <dbReference type="Rhea" id="RHEA-COMP:17342"/>
        <dbReference type="ChEBI" id="CHEBI:33019"/>
        <dbReference type="ChEBI" id="CHEBI:61557"/>
        <dbReference type="ChEBI" id="CHEBI:140395"/>
        <dbReference type="EC" id="2.7.7.48"/>
    </reaction>
</comment>
<comment type="catalytic activity">
    <reaction evidence="21">
        <text>a ribonucleoside 5'-triphosphate + H2O = a ribonucleoside 5'-diphosphate + phosphate + H(+)</text>
        <dbReference type="Rhea" id="RHEA:23680"/>
        <dbReference type="ChEBI" id="CHEBI:15377"/>
        <dbReference type="ChEBI" id="CHEBI:15378"/>
        <dbReference type="ChEBI" id="CHEBI:43474"/>
        <dbReference type="ChEBI" id="CHEBI:57930"/>
        <dbReference type="ChEBI" id="CHEBI:61557"/>
        <dbReference type="EC" id="3.6.1.15"/>
    </reaction>
</comment>
<comment type="catalytic activity">
    <reaction evidence="21">
        <text>ATP + H2O = ADP + phosphate + H(+)</text>
        <dbReference type="Rhea" id="RHEA:13065"/>
        <dbReference type="ChEBI" id="CHEBI:15377"/>
        <dbReference type="ChEBI" id="CHEBI:15378"/>
        <dbReference type="ChEBI" id="CHEBI:30616"/>
        <dbReference type="ChEBI" id="CHEBI:43474"/>
        <dbReference type="ChEBI" id="CHEBI:456216"/>
        <dbReference type="EC" id="3.6.4.13"/>
    </reaction>
</comment>
<comment type="catalytic activity">
    <reaction evidence="17">
        <text>a 5'-end (5'-triphosphoguanosine)-ribonucleoside in mRNA + S-adenosyl-L-methionine = a 5'-end (N(7)-methyl 5'-triphosphoguanosine)-ribonucleoside in mRNA + S-adenosyl-L-homocysteine</text>
        <dbReference type="Rhea" id="RHEA:67008"/>
        <dbReference type="Rhea" id="RHEA-COMP:17166"/>
        <dbReference type="Rhea" id="RHEA-COMP:17167"/>
        <dbReference type="ChEBI" id="CHEBI:57856"/>
        <dbReference type="ChEBI" id="CHEBI:59789"/>
        <dbReference type="ChEBI" id="CHEBI:156461"/>
        <dbReference type="ChEBI" id="CHEBI:167617"/>
        <dbReference type="EC" id="2.1.1.56"/>
    </reaction>
</comment>
<comment type="catalytic activity">
    <reaction evidence="17">
        <text>a 5'-end (N(7)-methyl 5'-triphosphoguanosine)-ribonucleoside in mRNA + S-adenosyl-L-methionine = a 5'-end (N(7)-methyl 5'-triphosphoguanosine)-(2'-O-methyl-ribonucleoside) in mRNA + S-adenosyl-L-homocysteine + H(+)</text>
        <dbReference type="Rhea" id="RHEA:67020"/>
        <dbReference type="Rhea" id="RHEA-COMP:17167"/>
        <dbReference type="Rhea" id="RHEA-COMP:17168"/>
        <dbReference type="ChEBI" id="CHEBI:15378"/>
        <dbReference type="ChEBI" id="CHEBI:57856"/>
        <dbReference type="ChEBI" id="CHEBI:59789"/>
        <dbReference type="ChEBI" id="CHEBI:156461"/>
        <dbReference type="ChEBI" id="CHEBI:167609"/>
        <dbReference type="EC" id="2.1.1.57"/>
    </reaction>
</comment>
<comment type="cofactor">
    <cofactor>
        <name>Mn(2+)</name>
        <dbReference type="ChEBI" id="CHEBI:29035"/>
    </cofactor>
    <cofactor>
        <name>Mg(2+)</name>
        <dbReference type="ChEBI" id="CHEBI:18420"/>
    </cofactor>
    <text evidence="22">For RNA-directed RNA polymerase NS5 activity; Mn(2+) is more effective than Mg(2+).</text>
</comment>
<comment type="subunit">
    <molecule>Capsid protein C</molecule>
    <text evidence="6">Homodimer (By similarity). Interacts (via N-terminus) with host EXOC1 (via C-terminus); this interaction results in EXOC1 degradation through the proteasome degradation pathway (By similarity).</text>
</comment>
<comment type="subunit">
    <molecule>Protein prM</molecule>
    <text evidence="6">Forms heterodimers with envelope protein E in the endoplasmic reticulum and Golgi.</text>
</comment>
<comment type="subunit">
    <molecule>Envelope protein E</molecule>
    <text evidence="6 23">Homodimer; in the endoplasmic reticulum and Golgi (By similarity). Interacts with protein prM (By similarity). Interacts with non-structural protein 1 (By similarity). Interacts with host HSPA5 (PubMed:28053106).</text>
</comment>
<comment type="subunit">
    <molecule>Non-structural protein 1</molecule>
    <text evidence="10">Homodimer; Homohexamer when secreted (By similarity). Interacts with envelope protein E (By similarity). NS1 interacts with NS4B (By similarity). Interacts with host complement protein CFH; this interaction leads to the degradation of C3 (By similarity).</text>
</comment>
<comment type="subunit">
    <molecule>Non-structural protein 2A</molecule>
    <text evidence="1">Interacts (via N-terminus) with serine protease NS3.</text>
</comment>
<comment type="subunit">
    <molecule>Serine protease subunit NS2B</molecule>
    <text evidence="6 24 25">Forms a heterodimer with serine protease NS3 (PubMed:7897348). May form homooligomers (By similarity). Interacts with human SPCS1 (PubMed:29593046).</text>
</comment>
<comment type="subunit">
    <molecule>Serine protease NS3</molecule>
    <text evidence="6 25">Forms a heterodimer with NS2B (PubMed:7897348). Interacts with non-structural protein 2A (via N-terminus) (By similarity). Interacts with NS4B (By similarity). Interacts with unphosphorylated RNA-directed RNA polymerase NS5; this interaction stimulates RNA-directed RNA polymerase NS5 guanylyltransferase activity (By similarity). Interacts with host ILF2 (PubMed:31212927).</text>
</comment>
<comment type="subunit">
    <molecule>Non-structural protein 4B</molecule>
    <text evidence="6">Interacts with serine protease NS3 (By similarity).</text>
</comment>
<comment type="subunit">
    <molecule>RNA-directed RNA polymerase NS5</molecule>
    <text evidence="6">Homodimer. Interacts with host STAT2; this interaction inhibits the phosphorylation of the latter, and, when all viral proteins are present (polyprotein), targets STAT2 for degradation. Interacts with serine protease NS3.</text>
</comment>
<comment type="subcellular location">
    <molecule>Genome polyprotein</molecule>
    <subcellularLocation>
        <location evidence="11">Host endoplasmic reticulum membrane</location>
        <topology evidence="11">Multi-pass membrane protein</topology>
    </subcellularLocation>
</comment>
<comment type="subcellular location">
    <molecule>Capsid protein C</molecule>
    <subcellularLocation>
        <location evidence="6">Virion</location>
    </subcellularLocation>
    <subcellularLocation>
        <location evidence="6">Host nucleus</location>
    </subcellularLocation>
    <subcellularLocation>
        <location evidence="2">Host cytoplasm</location>
    </subcellularLocation>
    <subcellularLocation>
        <location evidence="2">Host cytoplasm</location>
        <location evidence="2">Host perinuclear region</location>
    </subcellularLocation>
</comment>
<comment type="subcellular location">
    <molecule>Peptide pr</molecule>
    <subcellularLocation>
        <location evidence="6">Secreted</location>
    </subcellularLocation>
</comment>
<comment type="subcellular location">
    <molecule>Small envelope protein M</molecule>
    <subcellularLocation>
        <location evidence="1">Virion membrane</location>
        <topology evidence="1">Multi-pass membrane protein</topology>
    </subcellularLocation>
    <subcellularLocation>
        <location evidence="1">Host endoplasmic reticulum membrane</location>
        <topology evidence="11">Multi-pass membrane protein</topology>
    </subcellularLocation>
    <text evidence="1">ER membrane retention is mediated by the transmembrane domains.</text>
</comment>
<comment type="subcellular location">
    <molecule>Envelope protein E</molecule>
    <subcellularLocation>
        <location evidence="26">Virion membrane</location>
        <topology evidence="1">Multi-pass membrane protein</topology>
    </subcellularLocation>
    <subcellularLocation>
        <location evidence="1">Host endoplasmic reticulum membrane</location>
        <topology evidence="11">Multi-pass membrane protein</topology>
    </subcellularLocation>
    <subcellularLocation>
        <location evidence="23">Host cell surface</location>
    </subcellularLocation>
    <text evidence="1">ER membrane retention is mediated by the transmembrane domains.</text>
</comment>
<comment type="subcellular location">
    <molecule>Non-structural protein 1</molecule>
    <subcellularLocation>
        <location evidence="6">Secreted</location>
    </subcellularLocation>
    <subcellularLocation>
        <location>Host endoplasmic reticulum membrane</location>
        <topology>Peripheral membrane protein</topology>
        <orientation evidence="6">Lumenal side</orientation>
    </subcellularLocation>
    <text evidence="10">Located in RE-derived vesicles hosting the replication complex.</text>
</comment>
<comment type="subcellular location">
    <molecule>Non-structural protein 2A</molecule>
    <subcellularLocation>
        <location evidence="3">Host endoplasmic reticulum membrane</location>
        <topology evidence="6">Multi-pass membrane protein</topology>
    </subcellularLocation>
</comment>
<comment type="subcellular location">
    <molecule>Serine protease subunit NS2B</molecule>
    <subcellularLocation>
        <location>Host endoplasmic reticulum membrane</location>
        <topology evidence="6">Multi-pass membrane protein</topology>
    </subcellularLocation>
</comment>
<comment type="subcellular location">
    <molecule>Serine protease NS3</molecule>
    <subcellularLocation>
        <location evidence="16">Host endoplasmic reticulum membrane</location>
        <topology evidence="16">Peripheral membrane protein</topology>
        <orientation evidence="16">Cytoplasmic side</orientation>
    </subcellularLocation>
    <text evidence="16">Remains non-covalently associated to serine protease subunit NS2B.</text>
</comment>
<comment type="subcellular location">
    <molecule>Non-structural protein 4A</molecule>
    <subcellularLocation>
        <location evidence="3">Host endoplasmic reticulum membrane</location>
        <topology evidence="6">Multi-pass membrane protein</topology>
    </subcellularLocation>
    <text evidence="6">Located in RE-associated vesicles hosting the replication complex.</text>
</comment>
<comment type="subcellular location">
    <molecule>Non-structural protein 4B</molecule>
    <subcellularLocation>
        <location evidence="6">Host endoplasmic reticulum membrane</location>
        <topology evidence="6">Multi-pass membrane protein</topology>
    </subcellularLocation>
    <text evidence="10">Located in RE-derived vesicles hosting the replication complex.</text>
</comment>
<comment type="subcellular location">
    <molecule>RNA-directed RNA polymerase NS5</molecule>
    <subcellularLocation>
        <location>Host endoplasmic reticulum membrane</location>
        <topology>Peripheral membrane protein</topology>
        <orientation evidence="6">Cytoplasmic side</orientation>
    </subcellularLocation>
    <subcellularLocation>
        <location evidence="19">Host nucleus</location>
    </subcellularLocation>
    <text evidence="6">Located in RE-associated vesicles hosting the replication complex. NS5 protein is mainly localized in the nucleus rather than in ER vesicles.</text>
</comment>
<comment type="alternative products">
    <event type="ribosomal frameshifting"/>
    <isoform>
        <id>P27395-1</id>
        <name>Genome polyprotein</name>
        <sequence type="displayed"/>
    </isoform>
    <isoform>
        <id>P0DOH7-1</id>
        <name>Structural polyprotein</name>
        <sequence type="external"/>
    </isoform>
</comment>
<comment type="domain">
    <text evidence="6">The transmembrane domains of the small envelope protein M and envelope protein E contain an endoplasmic reticulum retention signal.</text>
</comment>
<comment type="PTM">
    <molecule>Genome polyprotein</molecule>
    <text evidence="6 25">Specific enzymatic cleavages in vivo yield mature proteins (PubMed:7897348). Cleavages in the lumen of endoplasmic reticulum are performed by host signal peptidase, whereas cleavages in the cytoplasmic side are performed by serine protease NS3. Signal cleavage at the 2K-4B site requires a prior NS3 protease-mediated cleavage at the 4A-2K site.</text>
</comment>
<comment type="PTM">
    <molecule>Protein prM</molecule>
    <text evidence="6">Cleaved in post-Golgi vesicles by a host furin, releasing the mature small envelope protein M, and peptide pr. This cleavage is incomplete as up to 30% of viral particles still carry uncleaved prM.</text>
</comment>
<comment type="PTM">
    <molecule>Envelope protein E</molecule>
    <text evidence="6">N-glycosylated.</text>
</comment>
<comment type="PTM">
    <molecule>Non-structural protein 1</molecule>
    <text evidence="6">N-glycosylated. The excreted form is glycosylated and this is required for efficient secretion of the protein from infected cells.</text>
</comment>
<comment type="PTM">
    <molecule>Serine protease NS3</molecule>
    <text evidence="8">Acetylated by host KAT5. Acetylation modulates NS3 RNA-binding and unwinding activities and plays an important positive role for viral replication.</text>
</comment>
<comment type="PTM">
    <molecule>RNA-directed RNA polymerase NS5</molecule>
    <text evidence="6">Phosphorylated on serines residues. This phosphorylation may trigger NS5 nuclear localization.</text>
</comment>
<comment type="miscellaneous">
    <text evidence="26">Strain SA-14 is classified as genotype III.</text>
</comment>
<comment type="similarity">
    <text evidence="17">In the N-terminal section; belongs to the class I-like SAM-binding methyltransferase superfamily. mRNA cap 0-1 NS5-type methyltransferase family.</text>
</comment>
<comment type="sequence caution" evidence="26">
    <conflict type="erroneous initiation">
        <sequence resource="EMBL-CDS" id="AAA46249"/>
    </conflict>
    <text>Truncated N-terminus.</text>
</comment>
<name>POLG_JAEV1</name>
<reference key="1">
    <citation type="journal article" date="1990" name="Virology">
        <title>Nucleotide sequence of the virulent SA-14 strain of Japanese encephalitis virus and its attenuated vaccine derivative, SA-14-14-2.</title>
        <authorList>
            <person name="Nitayaphan S."/>
            <person name="Grant J.A."/>
            <person name="Chang G.J.J."/>
            <person name="Trent D.W."/>
        </authorList>
    </citation>
    <scope>NUCLEOTIDE SEQUENCE [GENOMIC RNA]</scope>
</reference>
<reference key="2">
    <citation type="journal article" date="1995" name="J. Gen. Virol.">
        <title>Processing of Japanese encephalitis virus non-structural proteins: NS2B-NS3 complex and heterologous proteases.</title>
        <authorList>
            <person name="Jan L.R."/>
            <person name="Yang C.S."/>
            <person name="Trent D.W."/>
            <person name="Falgout B."/>
            <person name="Lai C.J."/>
        </authorList>
    </citation>
    <scope>FUNCTION (SERINE PROTEASE NS3)</scope>
    <scope>CATALYTIC ACTIVITY (SERINE PROTEASE NS3)</scope>
    <scope>PROTEOLYTIC CLEAVAGE (GENOME POLYPROTEIN)</scope>
    <scope>FUNCTION (SERINE PROTEASE SUBUNIT NS2B)</scope>
    <scope>INTERACTION WITH SERINE PROTEASE SUBUNIT NS2B (SERINE PROTEASE NS3)</scope>
    <scope>INTERACTION WITH SERINE PROTEASE NS3 (SERINE PROTEASE SUBUNIT NS2B)</scope>
</reference>
<reference key="3">
    <citation type="journal article" date="2006" name="J. Virol.">
        <title>Nuclear localization of flavivirus RNA synthesis in infected cells.</title>
        <authorList>
            <person name="Uchil P.D."/>
            <person name="Kumar A.V."/>
            <person name="Satchidanandam V."/>
        </authorList>
    </citation>
    <scope>SUBCELLULAR LOCATION (RNA-DIRECTED RNA POLYMERASE NS5)</scope>
    <source>
        <strain>P20778</strain>
    </source>
</reference>
<reference key="4">
    <citation type="journal article" date="2006" name="J. Virol.">
        <title>Blocking of interferon-induced Jak-Stat signaling by Japanese encephalitis virus NS5 through a protein tyrosine phosphatase-mediated mechanism.</title>
        <authorList>
            <person name="Lin R.J."/>
            <person name="Chang B.L."/>
            <person name="Yu H.P."/>
            <person name="Liao C.L."/>
            <person name="Lin Y.L."/>
        </authorList>
    </citation>
    <scope>FUNCTION (RNA-DIRECTED RNA POLYMERASE NS5)</scope>
</reference>
<reference key="5">
    <citation type="journal article" date="2017" name="J. Virol.">
        <title>GRP78 Is an Important Host Factor for Japanese Encephalitis Virus Entry and Replication in Mammalian Cells.</title>
        <authorList>
            <person name="Nain M."/>
            <person name="Mukherjee S."/>
            <person name="Karmakar S.P."/>
            <person name="Paton A.W."/>
            <person name="Paton J.C."/>
            <person name="Abdin M.Z."/>
            <person name="Basu A."/>
            <person name="Kalia M."/>
            <person name="Vrati S."/>
        </authorList>
    </citation>
    <scope>FUNCTION (ENVELOPE PROTEIN E)</scope>
    <scope>INTERACTION WITH HOST HSPA5 (ENVELOPE PROTEIN E)</scope>
    <scope>SUBCELLULAR LOCATION (ENVELOPE PROTEIN E)</scope>
</reference>
<reference key="6">
    <citation type="journal article" date="2018" name="J. Virol.">
        <title>Host Factor SPCS1 Regulates the Replication of Japanese Encephalitis Virus through Interactions with Transmembrane Domains of NS2B.</title>
        <authorList>
            <person name="Ma L."/>
            <person name="Li F."/>
            <person name="Zhang J.W."/>
            <person name="Li W."/>
            <person name="Zhao D.M."/>
            <person name="Wang H."/>
            <person name="Hua R.H."/>
            <person name="Bu Z.G."/>
        </authorList>
    </citation>
    <scope>INTERACTION WITH HUMAN SPCS1</scope>
    <scope>MUTAGENESIS OF GLU-1379; GLY-1385; PRO-1405; GLY-1410; GLY-1420; PRO-1485 AND ILE-1488</scope>
</reference>
<reference key="7">
    <citation type="journal article" date="2019" name="Viruses">
        <title>Cellular Interleukin Enhancer-Binding Factor 2, ILF2, Inhibits Japanese Encephalitis Virus Replication In Vitro.</title>
        <authorList>
            <person name="Cui X."/>
            <person name="Qian P."/>
            <person name="Rao T."/>
            <person name="Wei Y."/>
            <person name="Zhao F."/>
            <person name="Zhang H."/>
            <person name="Chen H."/>
            <person name="Li X."/>
        </authorList>
    </citation>
    <scope>INTERACTION WITH HUMAN PROTEIN ILF2 (SERINE PROTEASE NS3)</scope>
</reference>
<reference evidence="28" key="8">
    <citation type="journal article" date="2008" name="Virology">
        <title>Crystal structure of the catalytic domain of Japanese encephalitis virus NS3 helicase/nucleoside triphosphatase at a resolution of 1.8 A.</title>
        <authorList>
            <person name="Yamashita T."/>
            <person name="Unno H."/>
            <person name="Mori Y."/>
            <person name="Tani H."/>
            <person name="Moriishi K."/>
            <person name="Takamizawa A."/>
            <person name="Agoh M."/>
            <person name="Tsukihara T."/>
            <person name="Matsuura Y."/>
        </authorList>
    </citation>
    <scope>X-RAY CRYSTALLOGRAPHY (1.8 ANGSTROMS) OF 1685-2123</scope>
    <scope>MUTAGENESIS OF GLY-1703; LYS-1704; THR-1705; GLN-1961; ARG-1962; ARG-1965 AND ARG-1968</scope>
    <scope>CATALYTIC ACTIVITY (SERINE PROTEASE NS3)</scope>
    <scope>FUNCTION (SERINE PROTEASE NS3)</scope>
</reference>
<reference evidence="29" key="9">
    <citation type="journal article" date="2012" name="J. Virol.">
        <title>Crystal structure of the Japanese encephalitis virus envelope protein.</title>
        <authorList>
            <person name="Luca V.C."/>
            <person name="AbiMansour J."/>
            <person name="Nelson C.A."/>
            <person name="Fremont D.H."/>
        </authorList>
    </citation>
    <scope>X-RAY CRYSTALLOGRAPHY (2.10 ANGSTROMS) OF 295-700</scope>
</reference>
<reference evidence="32" key="10">
    <citation type="journal article" date="2013" name="PLoS Pathog.">
        <title>Crystal Structure of the full-length Japanese encephalitis virus NS5 reveals a conserved methyltransferase-polymerase interface.</title>
        <authorList>
            <person name="Lu G."/>
            <person name="Gong P."/>
        </authorList>
    </citation>
    <scope>X-RAY CRYSTALLOGRAPHY (2.60 ANGSTROMS) OF 2528-3432 IN COMPLEX WITH S-ADENOSYL-L-HOMOCYSTEINE AND ZINC</scope>
</reference>
<reference evidence="30 31 33" key="11">
    <citation type="journal article" date="2014" name="Nucleic Acids Res.">
        <title>RNA-dependent RNA polymerase of Japanese encephalitis virus binds the initiator nucleotide GTP to form a mechanistically important pre-initiation state.</title>
        <authorList>
            <person name="Surana P."/>
            <person name="Satchidanandam V."/>
            <person name="Nair D.T."/>
        </authorList>
    </citation>
    <scope>X-RAY CRYSTALLOGRAPHY (2.28 ANGSTROMS) OF 2799-3432 IN COMPLEX WITH ATP; GTP AND ZINC</scope>
    <scope>FUNCTION (RNA-DIRECTED RNA POLYMERASE NS5)</scope>
    <scope>COFACTOR (RNA-DIRECTED RNA POLYMERASE NS5)</scope>
</reference>
<organismHost>
    <name type="scientific">Ardeidae</name>
    <name type="common">herons</name>
    <dbReference type="NCBI Taxonomy" id="8899"/>
</organismHost>
<organismHost>
    <name type="scientific">Bos taurus</name>
    <name type="common">Bovine</name>
    <dbReference type="NCBI Taxonomy" id="9913"/>
</organismHost>
<organismHost>
    <name type="scientific">Culex gelidus</name>
    <dbReference type="NCBI Taxonomy" id="308713"/>
</organismHost>
<organismHost>
    <name type="scientific">Culex tritaeniorhynchus</name>
    <name type="common">Mosquito</name>
    <dbReference type="NCBI Taxonomy" id="7178"/>
</organismHost>
<organismHost>
    <name type="scientific">Equus caballus</name>
    <name type="common">Horse</name>
    <dbReference type="NCBI Taxonomy" id="9796"/>
</organismHost>
<organismHost>
    <name type="scientific">Homo sapiens</name>
    <name type="common">Human</name>
    <dbReference type="NCBI Taxonomy" id="9606"/>
</organismHost>
<organismHost>
    <name type="scientific">Sus scrofa</name>
    <name type="common">Pig</name>
    <dbReference type="NCBI Taxonomy" id="9823"/>
</organismHost>